<protein>
    <recommendedName>
        <fullName evidence="1 16">Large ribosomal subunit protein uL6</fullName>
    </recommendedName>
    <alternativeName>
        <fullName>50S ribosomal protein L6</fullName>
    </alternativeName>
</protein>
<dbReference type="EMBL" id="X01563">
    <property type="protein sequence ID" value="CAA25720.1"/>
    <property type="molecule type" value="Genomic_DNA"/>
</dbReference>
<dbReference type="EMBL" id="U18997">
    <property type="protein sequence ID" value="AAA58102.1"/>
    <property type="molecule type" value="Genomic_DNA"/>
</dbReference>
<dbReference type="EMBL" id="U00096">
    <property type="protein sequence ID" value="AAC76330.1"/>
    <property type="molecule type" value="Genomic_DNA"/>
</dbReference>
<dbReference type="EMBL" id="AP009048">
    <property type="protein sequence ID" value="BAE77986.1"/>
    <property type="molecule type" value="Genomic_DNA"/>
</dbReference>
<dbReference type="PIR" id="D65123">
    <property type="entry name" value="R5EC6"/>
</dbReference>
<dbReference type="RefSeq" id="NP_417764.1">
    <property type="nucleotide sequence ID" value="NC_000913.3"/>
</dbReference>
<dbReference type="RefSeq" id="WP_000091945.1">
    <property type="nucleotide sequence ID" value="NZ_STEB01000038.1"/>
</dbReference>
<dbReference type="PDB" id="1EG0">
    <property type="method" value="EM"/>
    <property type="resolution" value="11.50 A"/>
    <property type="chains" value="J=1-171"/>
</dbReference>
<dbReference type="PDB" id="1ML5">
    <property type="method" value="EM"/>
    <property type="resolution" value="14.00 A"/>
    <property type="chains" value="h=2-177"/>
</dbReference>
<dbReference type="PDB" id="2J28">
    <property type="method" value="EM"/>
    <property type="resolution" value="8.00 A"/>
    <property type="chains" value="G=2-177"/>
</dbReference>
<dbReference type="PDB" id="2RDO">
    <property type="method" value="EM"/>
    <property type="resolution" value="9.10 A"/>
    <property type="chains" value="G=2-177"/>
</dbReference>
<dbReference type="PDB" id="3BBX">
    <property type="method" value="EM"/>
    <property type="resolution" value="10.00 A"/>
    <property type="chains" value="G=2-177"/>
</dbReference>
<dbReference type="PDB" id="3J5L">
    <property type="method" value="EM"/>
    <property type="resolution" value="6.60 A"/>
    <property type="chains" value="G=2-177"/>
</dbReference>
<dbReference type="PDB" id="3J7Z">
    <property type="method" value="EM"/>
    <property type="resolution" value="3.90 A"/>
    <property type="chains" value="G=1-177"/>
</dbReference>
<dbReference type="PDB" id="3J8G">
    <property type="method" value="EM"/>
    <property type="resolution" value="5.00 A"/>
    <property type="chains" value="G=1-177"/>
</dbReference>
<dbReference type="PDB" id="3J9Y">
    <property type="method" value="EM"/>
    <property type="resolution" value="3.90 A"/>
    <property type="chains" value="G=1-177"/>
</dbReference>
<dbReference type="PDB" id="3J9Z">
    <property type="method" value="EM"/>
    <property type="resolution" value="3.60 A"/>
    <property type="chains" value="L8=2-177"/>
</dbReference>
<dbReference type="PDB" id="3JA1">
    <property type="method" value="EM"/>
    <property type="resolution" value="3.60 A"/>
    <property type="chains" value="LH=2-177"/>
</dbReference>
<dbReference type="PDB" id="3JBU">
    <property type="method" value="EM"/>
    <property type="resolution" value="3.64 A"/>
    <property type="chains" value="g=1-177"/>
</dbReference>
<dbReference type="PDB" id="3JBV">
    <property type="method" value="EM"/>
    <property type="resolution" value="3.32 A"/>
    <property type="chains" value="g=1-177"/>
</dbReference>
<dbReference type="PDB" id="3JCD">
    <property type="method" value="EM"/>
    <property type="resolution" value="3.70 A"/>
    <property type="chains" value="G=1-177"/>
</dbReference>
<dbReference type="PDB" id="3JCE">
    <property type="method" value="EM"/>
    <property type="resolution" value="3.20 A"/>
    <property type="chains" value="G=1-177"/>
</dbReference>
<dbReference type="PDB" id="3JCJ">
    <property type="method" value="EM"/>
    <property type="resolution" value="3.70 A"/>
    <property type="chains" value="F=1-177"/>
</dbReference>
<dbReference type="PDB" id="3JCN">
    <property type="method" value="EM"/>
    <property type="resolution" value="4.60 A"/>
    <property type="chains" value="G=1-177"/>
</dbReference>
<dbReference type="PDB" id="487D">
    <property type="method" value="EM"/>
    <property type="resolution" value="7.50 A"/>
    <property type="chains" value="J=31-165"/>
</dbReference>
<dbReference type="PDB" id="4CSU">
    <property type="method" value="EM"/>
    <property type="resolution" value="5.50 A"/>
    <property type="chains" value="G=2-177"/>
</dbReference>
<dbReference type="PDB" id="4U1U">
    <property type="method" value="X-ray"/>
    <property type="resolution" value="2.95 A"/>
    <property type="chains" value="BG/DG=2-177"/>
</dbReference>
<dbReference type="PDB" id="4U1V">
    <property type="method" value="X-ray"/>
    <property type="resolution" value="3.00 A"/>
    <property type="chains" value="BG/DG=2-177"/>
</dbReference>
<dbReference type="PDB" id="4U20">
    <property type="method" value="X-ray"/>
    <property type="resolution" value="2.90 A"/>
    <property type="chains" value="BG/DG=2-177"/>
</dbReference>
<dbReference type="PDB" id="4U24">
    <property type="method" value="X-ray"/>
    <property type="resolution" value="2.90 A"/>
    <property type="chains" value="BG/DG=2-177"/>
</dbReference>
<dbReference type="PDB" id="4U25">
    <property type="method" value="X-ray"/>
    <property type="resolution" value="2.90 A"/>
    <property type="chains" value="BG/DG=2-177"/>
</dbReference>
<dbReference type="PDB" id="4U26">
    <property type="method" value="X-ray"/>
    <property type="resolution" value="2.80 A"/>
    <property type="chains" value="BG/DG=2-177"/>
</dbReference>
<dbReference type="PDB" id="4U27">
    <property type="method" value="X-ray"/>
    <property type="resolution" value="2.80 A"/>
    <property type="chains" value="BG/DG=2-177"/>
</dbReference>
<dbReference type="PDB" id="4UY8">
    <property type="method" value="EM"/>
    <property type="resolution" value="3.80 A"/>
    <property type="chains" value="G=2-177"/>
</dbReference>
<dbReference type="PDB" id="4V47">
    <property type="method" value="EM"/>
    <property type="resolution" value="12.30 A"/>
    <property type="chains" value="AE=2-177"/>
</dbReference>
<dbReference type="PDB" id="4V48">
    <property type="method" value="EM"/>
    <property type="resolution" value="11.50 A"/>
    <property type="chains" value="AE=2-177"/>
</dbReference>
<dbReference type="PDB" id="4V4H">
    <property type="method" value="X-ray"/>
    <property type="resolution" value="3.46 A"/>
    <property type="chains" value="BG/DG=1-177"/>
</dbReference>
<dbReference type="PDB" id="4V4Q">
    <property type="method" value="X-ray"/>
    <property type="resolution" value="3.46 A"/>
    <property type="chains" value="BG/DG=2-177"/>
</dbReference>
<dbReference type="PDB" id="4V4V">
    <property type="method" value="EM"/>
    <property type="resolution" value="15.00 A"/>
    <property type="chains" value="BE=6-172"/>
</dbReference>
<dbReference type="PDB" id="4V4W">
    <property type="method" value="EM"/>
    <property type="resolution" value="15.00 A"/>
    <property type="chains" value="BE=6-172"/>
</dbReference>
<dbReference type="PDB" id="4V50">
    <property type="method" value="X-ray"/>
    <property type="resolution" value="3.22 A"/>
    <property type="chains" value="BG/DG=2-177"/>
</dbReference>
<dbReference type="PDB" id="4V52">
    <property type="method" value="X-ray"/>
    <property type="resolution" value="3.21 A"/>
    <property type="chains" value="BG/DG=2-177"/>
</dbReference>
<dbReference type="PDB" id="4V53">
    <property type="method" value="X-ray"/>
    <property type="resolution" value="3.54 A"/>
    <property type="chains" value="BG/DG=2-177"/>
</dbReference>
<dbReference type="PDB" id="4V54">
    <property type="method" value="X-ray"/>
    <property type="resolution" value="3.30 A"/>
    <property type="chains" value="BG/DG=2-177"/>
</dbReference>
<dbReference type="PDB" id="4V55">
    <property type="method" value="X-ray"/>
    <property type="resolution" value="4.00 A"/>
    <property type="chains" value="BG/DG=2-177"/>
</dbReference>
<dbReference type="PDB" id="4V56">
    <property type="method" value="X-ray"/>
    <property type="resolution" value="3.93 A"/>
    <property type="chains" value="BG/DG=2-177"/>
</dbReference>
<dbReference type="PDB" id="4V57">
    <property type="method" value="X-ray"/>
    <property type="resolution" value="3.50 A"/>
    <property type="chains" value="BG/DG=2-177"/>
</dbReference>
<dbReference type="PDB" id="4V5B">
    <property type="method" value="X-ray"/>
    <property type="resolution" value="3.74 A"/>
    <property type="chains" value="AG/CG=2-177"/>
</dbReference>
<dbReference type="PDB" id="4V5H">
    <property type="method" value="EM"/>
    <property type="resolution" value="5.80 A"/>
    <property type="chains" value="BG=2-177"/>
</dbReference>
<dbReference type="PDB" id="4V5Y">
    <property type="method" value="X-ray"/>
    <property type="resolution" value="4.45 A"/>
    <property type="chains" value="BG/DG=2-177"/>
</dbReference>
<dbReference type="PDB" id="4V64">
    <property type="method" value="X-ray"/>
    <property type="resolution" value="3.50 A"/>
    <property type="chains" value="BG/DG=2-177"/>
</dbReference>
<dbReference type="PDB" id="4V65">
    <property type="method" value="EM"/>
    <property type="resolution" value="9.00 A"/>
    <property type="chains" value="B3=1-177"/>
</dbReference>
<dbReference type="PDB" id="4V66">
    <property type="method" value="EM"/>
    <property type="resolution" value="9.00 A"/>
    <property type="chains" value="B3=1-177"/>
</dbReference>
<dbReference type="PDB" id="4V69">
    <property type="method" value="EM"/>
    <property type="resolution" value="6.70 A"/>
    <property type="chains" value="BG=2-177"/>
</dbReference>
<dbReference type="PDB" id="4V6C">
    <property type="method" value="X-ray"/>
    <property type="resolution" value="3.19 A"/>
    <property type="chains" value="BG/DG=1-177"/>
</dbReference>
<dbReference type="PDB" id="4V6D">
    <property type="method" value="X-ray"/>
    <property type="resolution" value="3.81 A"/>
    <property type="chains" value="BG/DG=1-177"/>
</dbReference>
<dbReference type="PDB" id="4V6E">
    <property type="method" value="X-ray"/>
    <property type="resolution" value="3.71 A"/>
    <property type="chains" value="BG/DG=1-177"/>
</dbReference>
<dbReference type="PDB" id="4V6K">
    <property type="method" value="EM"/>
    <property type="resolution" value="8.25 A"/>
    <property type="chains" value="AH=1-177"/>
</dbReference>
<dbReference type="PDB" id="4V6L">
    <property type="method" value="EM"/>
    <property type="resolution" value="13.20 A"/>
    <property type="chains" value="BH=1-177"/>
</dbReference>
<dbReference type="PDB" id="4V6M">
    <property type="method" value="EM"/>
    <property type="resolution" value="7.10 A"/>
    <property type="chains" value="BG=2-177"/>
</dbReference>
<dbReference type="PDB" id="4V6N">
    <property type="method" value="EM"/>
    <property type="resolution" value="12.10 A"/>
    <property type="chains" value="AH=2-177"/>
</dbReference>
<dbReference type="PDB" id="4V6O">
    <property type="method" value="EM"/>
    <property type="resolution" value="14.70 A"/>
    <property type="chains" value="BH=2-177"/>
</dbReference>
<dbReference type="PDB" id="4V6P">
    <property type="method" value="EM"/>
    <property type="resolution" value="13.50 A"/>
    <property type="chains" value="BH=2-177"/>
</dbReference>
<dbReference type="PDB" id="4V6Q">
    <property type="method" value="EM"/>
    <property type="resolution" value="11.50 A"/>
    <property type="chains" value="BH=2-177"/>
</dbReference>
<dbReference type="PDB" id="4V6R">
    <property type="method" value="EM"/>
    <property type="resolution" value="11.50 A"/>
    <property type="chains" value="BH=2-177"/>
</dbReference>
<dbReference type="PDB" id="4V6S">
    <property type="method" value="EM"/>
    <property type="resolution" value="13.10 A"/>
    <property type="chains" value="AH=2-177"/>
</dbReference>
<dbReference type="PDB" id="4V6T">
    <property type="method" value="EM"/>
    <property type="resolution" value="8.30 A"/>
    <property type="chains" value="BG=2-177"/>
</dbReference>
<dbReference type="PDB" id="4V6V">
    <property type="method" value="EM"/>
    <property type="resolution" value="9.80 A"/>
    <property type="chains" value="BH=2-177"/>
</dbReference>
<dbReference type="PDB" id="4V6Y">
    <property type="method" value="EM"/>
    <property type="resolution" value="12.00 A"/>
    <property type="chains" value="BG=1-177"/>
</dbReference>
<dbReference type="PDB" id="4V6Z">
    <property type="method" value="EM"/>
    <property type="resolution" value="12.00 A"/>
    <property type="chains" value="BG=1-177"/>
</dbReference>
<dbReference type="PDB" id="4V70">
    <property type="method" value="EM"/>
    <property type="resolution" value="17.00 A"/>
    <property type="chains" value="BG=1-177"/>
</dbReference>
<dbReference type="PDB" id="4V71">
    <property type="method" value="EM"/>
    <property type="resolution" value="20.00 A"/>
    <property type="chains" value="BG=1-177"/>
</dbReference>
<dbReference type="PDB" id="4V72">
    <property type="method" value="EM"/>
    <property type="resolution" value="13.00 A"/>
    <property type="chains" value="BG=1-177"/>
</dbReference>
<dbReference type="PDB" id="4V73">
    <property type="method" value="EM"/>
    <property type="resolution" value="15.00 A"/>
    <property type="chains" value="BG=1-177"/>
</dbReference>
<dbReference type="PDB" id="4V74">
    <property type="method" value="EM"/>
    <property type="resolution" value="17.00 A"/>
    <property type="chains" value="BG=1-177"/>
</dbReference>
<dbReference type="PDB" id="4V75">
    <property type="method" value="EM"/>
    <property type="resolution" value="12.00 A"/>
    <property type="chains" value="BG=1-177"/>
</dbReference>
<dbReference type="PDB" id="4V76">
    <property type="method" value="EM"/>
    <property type="resolution" value="17.00 A"/>
    <property type="chains" value="BG=1-177"/>
</dbReference>
<dbReference type="PDB" id="4V77">
    <property type="method" value="EM"/>
    <property type="resolution" value="17.00 A"/>
    <property type="chains" value="BG=1-177"/>
</dbReference>
<dbReference type="PDB" id="4V78">
    <property type="method" value="EM"/>
    <property type="resolution" value="20.00 A"/>
    <property type="chains" value="BG=1-177"/>
</dbReference>
<dbReference type="PDB" id="4V79">
    <property type="method" value="EM"/>
    <property type="resolution" value="15.00 A"/>
    <property type="chains" value="BG=1-177"/>
</dbReference>
<dbReference type="PDB" id="4V7A">
    <property type="method" value="EM"/>
    <property type="resolution" value="9.00 A"/>
    <property type="chains" value="BG=1-177"/>
</dbReference>
<dbReference type="PDB" id="4V7B">
    <property type="method" value="EM"/>
    <property type="resolution" value="6.80 A"/>
    <property type="chains" value="BG=1-177"/>
</dbReference>
<dbReference type="PDB" id="4V7C">
    <property type="method" value="EM"/>
    <property type="resolution" value="7.60 A"/>
    <property type="chains" value="BH=2-177"/>
</dbReference>
<dbReference type="PDB" id="4V7D">
    <property type="method" value="EM"/>
    <property type="resolution" value="7.60 A"/>
    <property type="chains" value="AH=2-177"/>
</dbReference>
<dbReference type="PDB" id="4V7I">
    <property type="method" value="EM"/>
    <property type="resolution" value="9.60 A"/>
    <property type="chains" value="AG=1-177"/>
</dbReference>
<dbReference type="PDB" id="4V7S">
    <property type="method" value="X-ray"/>
    <property type="resolution" value="3.25 A"/>
    <property type="chains" value="BG/DG=2-177"/>
</dbReference>
<dbReference type="PDB" id="4V7T">
    <property type="method" value="X-ray"/>
    <property type="resolution" value="3.19 A"/>
    <property type="chains" value="BG/DG=2-177"/>
</dbReference>
<dbReference type="PDB" id="4V7U">
    <property type="method" value="X-ray"/>
    <property type="resolution" value="3.10 A"/>
    <property type="chains" value="BG/DG=2-177"/>
</dbReference>
<dbReference type="PDB" id="4V7V">
    <property type="method" value="X-ray"/>
    <property type="resolution" value="3.29 A"/>
    <property type="chains" value="BG/DG=2-177"/>
</dbReference>
<dbReference type="PDB" id="4V85">
    <property type="method" value="X-ray"/>
    <property type="resolution" value="3.20 A"/>
    <property type="chains" value="BG=1-177"/>
</dbReference>
<dbReference type="PDB" id="4V89">
    <property type="method" value="X-ray"/>
    <property type="resolution" value="3.70 A"/>
    <property type="chains" value="BG=1-177"/>
</dbReference>
<dbReference type="PDB" id="4V9C">
    <property type="method" value="X-ray"/>
    <property type="resolution" value="3.30 A"/>
    <property type="chains" value="BG/DG=1-177"/>
</dbReference>
<dbReference type="PDB" id="4V9D">
    <property type="method" value="X-ray"/>
    <property type="resolution" value="3.00 A"/>
    <property type="chains" value="CG/DG=2-177"/>
</dbReference>
<dbReference type="PDB" id="4V9O">
    <property type="method" value="X-ray"/>
    <property type="resolution" value="2.90 A"/>
    <property type="chains" value="AG/CG/EG/GG=1-177"/>
</dbReference>
<dbReference type="PDB" id="4V9P">
    <property type="method" value="X-ray"/>
    <property type="resolution" value="2.90 A"/>
    <property type="chains" value="AG/CG/EG/GG=1-177"/>
</dbReference>
<dbReference type="PDB" id="4WF1">
    <property type="method" value="X-ray"/>
    <property type="resolution" value="3.09 A"/>
    <property type="chains" value="BG/DG=2-177"/>
</dbReference>
<dbReference type="PDB" id="4WOI">
    <property type="method" value="X-ray"/>
    <property type="resolution" value="3.00 A"/>
    <property type="chains" value="BG/CG=1-177"/>
</dbReference>
<dbReference type="PDB" id="4WWW">
    <property type="method" value="X-ray"/>
    <property type="resolution" value="3.10 A"/>
    <property type="chains" value="RG/YG=2-177"/>
</dbReference>
<dbReference type="PDB" id="4YBB">
    <property type="method" value="X-ray"/>
    <property type="resolution" value="2.10 A"/>
    <property type="chains" value="CG/DG=2-177"/>
</dbReference>
<dbReference type="PDB" id="5ADY">
    <property type="method" value="EM"/>
    <property type="resolution" value="4.50 A"/>
    <property type="chains" value="G=1-177"/>
</dbReference>
<dbReference type="PDB" id="5AFI">
    <property type="method" value="EM"/>
    <property type="resolution" value="2.90 A"/>
    <property type="chains" value="G=1-177"/>
</dbReference>
<dbReference type="PDB" id="5AKA">
    <property type="method" value="EM"/>
    <property type="resolution" value="5.70 A"/>
    <property type="chains" value="G=2-177"/>
</dbReference>
<dbReference type="PDB" id="5GAD">
    <property type="method" value="EM"/>
    <property type="resolution" value="3.70 A"/>
    <property type="chains" value="G=1-177"/>
</dbReference>
<dbReference type="PDB" id="5GAE">
    <property type="method" value="EM"/>
    <property type="resolution" value="3.33 A"/>
    <property type="chains" value="G=1-177"/>
</dbReference>
<dbReference type="PDB" id="5GAF">
    <property type="method" value="EM"/>
    <property type="resolution" value="4.30 A"/>
    <property type="chains" value="G=2-177"/>
</dbReference>
<dbReference type="PDB" id="5GAG">
    <property type="method" value="EM"/>
    <property type="resolution" value="3.80 A"/>
    <property type="chains" value="G=1-177"/>
</dbReference>
<dbReference type="PDB" id="5GAH">
    <property type="method" value="EM"/>
    <property type="resolution" value="3.80 A"/>
    <property type="chains" value="G=1-177"/>
</dbReference>
<dbReference type="PDB" id="5H5U">
    <property type="method" value="EM"/>
    <property type="resolution" value="3.00 A"/>
    <property type="chains" value="G=2-177"/>
</dbReference>
<dbReference type="PDB" id="5IQR">
    <property type="method" value="EM"/>
    <property type="resolution" value="3.00 A"/>
    <property type="chains" value="F=1-177"/>
</dbReference>
<dbReference type="PDB" id="5IT8">
    <property type="method" value="X-ray"/>
    <property type="resolution" value="3.12 A"/>
    <property type="chains" value="CG/DG=2-177"/>
</dbReference>
<dbReference type="PDB" id="5J5B">
    <property type="method" value="X-ray"/>
    <property type="resolution" value="2.80 A"/>
    <property type="chains" value="CG/DG=2-177"/>
</dbReference>
<dbReference type="PDB" id="5J7L">
    <property type="method" value="X-ray"/>
    <property type="resolution" value="3.00 A"/>
    <property type="chains" value="CG/DG=2-177"/>
</dbReference>
<dbReference type="PDB" id="5J88">
    <property type="method" value="X-ray"/>
    <property type="resolution" value="3.32 A"/>
    <property type="chains" value="CG/DG=2-177"/>
</dbReference>
<dbReference type="PDB" id="5J8A">
    <property type="method" value="X-ray"/>
    <property type="resolution" value="3.10 A"/>
    <property type="chains" value="CG/DG=2-177"/>
</dbReference>
<dbReference type="PDB" id="5J91">
    <property type="method" value="X-ray"/>
    <property type="resolution" value="2.96 A"/>
    <property type="chains" value="CG/DG=2-177"/>
</dbReference>
<dbReference type="PDB" id="5JC9">
    <property type="method" value="X-ray"/>
    <property type="resolution" value="3.03 A"/>
    <property type="chains" value="CG/DG=2-177"/>
</dbReference>
<dbReference type="PDB" id="5JTE">
    <property type="method" value="EM"/>
    <property type="resolution" value="3.60 A"/>
    <property type="chains" value="BG=1-177"/>
</dbReference>
<dbReference type="PDB" id="5JU8">
    <property type="method" value="EM"/>
    <property type="resolution" value="3.60 A"/>
    <property type="chains" value="BG=1-177"/>
</dbReference>
<dbReference type="PDB" id="5KCR">
    <property type="method" value="EM"/>
    <property type="resolution" value="3.60 A"/>
    <property type="chains" value="1H=1-177"/>
</dbReference>
<dbReference type="PDB" id="5KCS">
    <property type="method" value="EM"/>
    <property type="resolution" value="3.90 A"/>
    <property type="chains" value="1H=1-177"/>
</dbReference>
<dbReference type="PDB" id="5KPS">
    <property type="method" value="EM"/>
    <property type="resolution" value="3.90 A"/>
    <property type="chains" value="F=1-177"/>
</dbReference>
<dbReference type="PDB" id="5KPV">
    <property type="method" value="EM"/>
    <property type="resolution" value="4.10 A"/>
    <property type="chains" value="E=1-177"/>
</dbReference>
<dbReference type="PDB" id="5KPW">
    <property type="method" value="EM"/>
    <property type="resolution" value="3.90 A"/>
    <property type="chains" value="E=1-177"/>
</dbReference>
<dbReference type="PDB" id="5KPX">
    <property type="method" value="EM"/>
    <property type="resolution" value="3.90 A"/>
    <property type="chains" value="E=1-177"/>
</dbReference>
<dbReference type="PDB" id="5L3P">
    <property type="method" value="EM"/>
    <property type="resolution" value="3.70 A"/>
    <property type="chains" value="H=1-177"/>
</dbReference>
<dbReference type="PDB" id="5LZA">
    <property type="method" value="EM"/>
    <property type="resolution" value="3.60 A"/>
    <property type="chains" value="G=2-177"/>
</dbReference>
<dbReference type="PDB" id="5LZB">
    <property type="method" value="EM"/>
    <property type="resolution" value="5.30 A"/>
    <property type="chains" value="G=2-177"/>
</dbReference>
<dbReference type="PDB" id="5LZC">
    <property type="method" value="EM"/>
    <property type="resolution" value="4.80 A"/>
    <property type="chains" value="G=2-177"/>
</dbReference>
<dbReference type="PDB" id="5LZD">
    <property type="method" value="EM"/>
    <property type="resolution" value="3.40 A"/>
    <property type="chains" value="G=2-177"/>
</dbReference>
<dbReference type="PDB" id="5LZE">
    <property type="method" value="EM"/>
    <property type="resolution" value="3.50 A"/>
    <property type="chains" value="G=2-177"/>
</dbReference>
<dbReference type="PDB" id="5LZF">
    <property type="method" value="EM"/>
    <property type="resolution" value="4.60 A"/>
    <property type="chains" value="G=2-177"/>
</dbReference>
<dbReference type="PDB" id="5MDV">
    <property type="method" value="EM"/>
    <property type="resolution" value="2.97 A"/>
    <property type="chains" value="F=1-177"/>
</dbReference>
<dbReference type="PDB" id="5MDW">
    <property type="method" value="EM"/>
    <property type="resolution" value="3.06 A"/>
    <property type="chains" value="F=1-177"/>
</dbReference>
<dbReference type="PDB" id="5MDY">
    <property type="method" value="EM"/>
    <property type="resolution" value="3.35 A"/>
    <property type="chains" value="F=1-177"/>
</dbReference>
<dbReference type="PDB" id="5MDZ">
    <property type="method" value="EM"/>
    <property type="resolution" value="3.10 A"/>
    <property type="chains" value="F=1-177"/>
</dbReference>
<dbReference type="PDB" id="5MGP">
    <property type="method" value="EM"/>
    <property type="resolution" value="3.10 A"/>
    <property type="chains" value="G=2-177"/>
</dbReference>
<dbReference type="PDB" id="5NCO">
    <property type="method" value="EM"/>
    <property type="resolution" value="4.80 A"/>
    <property type="chains" value="G=2-177"/>
</dbReference>
<dbReference type="PDB" id="5NP6">
    <property type="method" value="EM"/>
    <property type="resolution" value="3.60 A"/>
    <property type="chains" value="e=2-177"/>
</dbReference>
<dbReference type="PDB" id="5NWY">
    <property type="method" value="EM"/>
    <property type="resolution" value="2.93 A"/>
    <property type="chains" value="T=1-177"/>
</dbReference>
<dbReference type="PDB" id="5O2R">
    <property type="method" value="EM"/>
    <property type="resolution" value="3.40 A"/>
    <property type="chains" value="G=2-177"/>
</dbReference>
<dbReference type="PDB" id="5U4I">
    <property type="method" value="EM"/>
    <property type="resolution" value="3.50 A"/>
    <property type="chains" value="G=1-177"/>
</dbReference>
<dbReference type="PDB" id="5U9F">
    <property type="method" value="EM"/>
    <property type="resolution" value="3.20 A"/>
    <property type="chains" value="08=1-177"/>
</dbReference>
<dbReference type="PDB" id="5U9G">
    <property type="method" value="EM"/>
    <property type="resolution" value="3.20 A"/>
    <property type="chains" value="08=1-177"/>
</dbReference>
<dbReference type="PDB" id="5UYK">
    <property type="method" value="EM"/>
    <property type="resolution" value="3.90 A"/>
    <property type="chains" value="08=2-177"/>
</dbReference>
<dbReference type="PDB" id="5UYL">
    <property type="method" value="EM"/>
    <property type="resolution" value="3.60 A"/>
    <property type="chains" value="08=2-177"/>
</dbReference>
<dbReference type="PDB" id="5UYM">
    <property type="method" value="EM"/>
    <property type="resolution" value="3.20 A"/>
    <property type="chains" value="08=2-177"/>
</dbReference>
<dbReference type="PDB" id="5UYN">
    <property type="method" value="EM"/>
    <property type="resolution" value="4.00 A"/>
    <property type="chains" value="08=2-177"/>
</dbReference>
<dbReference type="PDB" id="5UYP">
    <property type="method" value="EM"/>
    <property type="resolution" value="3.90 A"/>
    <property type="chains" value="08=2-177"/>
</dbReference>
<dbReference type="PDB" id="5UYQ">
    <property type="method" value="EM"/>
    <property type="resolution" value="3.80 A"/>
    <property type="chains" value="08=2-177"/>
</dbReference>
<dbReference type="PDB" id="5WDT">
    <property type="method" value="EM"/>
    <property type="resolution" value="3.00 A"/>
    <property type="chains" value="G=2-175"/>
</dbReference>
<dbReference type="PDB" id="5WE4">
    <property type="method" value="EM"/>
    <property type="resolution" value="3.10 A"/>
    <property type="chains" value="G=2-175"/>
</dbReference>
<dbReference type="PDB" id="5WE6">
    <property type="method" value="EM"/>
    <property type="resolution" value="3.40 A"/>
    <property type="chains" value="G=2-175"/>
</dbReference>
<dbReference type="PDB" id="5WF0">
    <property type="method" value="EM"/>
    <property type="resolution" value="3.60 A"/>
    <property type="chains" value="G=2-175"/>
</dbReference>
<dbReference type="PDB" id="5WFK">
    <property type="method" value="EM"/>
    <property type="resolution" value="3.40 A"/>
    <property type="chains" value="G=2-175"/>
</dbReference>
<dbReference type="PDB" id="5WFS">
    <property type="method" value="EM"/>
    <property type="resolution" value="3.00 A"/>
    <property type="chains" value="G=2-175"/>
</dbReference>
<dbReference type="PDB" id="6BU8">
    <property type="method" value="EM"/>
    <property type="resolution" value="3.50 A"/>
    <property type="chains" value="08=2-177"/>
</dbReference>
<dbReference type="PDB" id="6BY1">
    <property type="method" value="X-ray"/>
    <property type="resolution" value="3.94 A"/>
    <property type="chains" value="CG/DG=2-177"/>
</dbReference>
<dbReference type="PDB" id="6C4I">
    <property type="method" value="EM"/>
    <property type="resolution" value="3.24 A"/>
    <property type="chains" value="G=1-177"/>
</dbReference>
<dbReference type="PDB" id="6DNC">
    <property type="method" value="EM"/>
    <property type="resolution" value="3.70 A"/>
    <property type="chains" value="J=1-177"/>
</dbReference>
<dbReference type="PDB" id="6ENF">
    <property type="method" value="EM"/>
    <property type="resolution" value="3.20 A"/>
    <property type="chains" value="G=2-177"/>
</dbReference>
<dbReference type="PDB" id="6ENJ">
    <property type="method" value="EM"/>
    <property type="resolution" value="3.70 A"/>
    <property type="chains" value="G=2-177"/>
</dbReference>
<dbReference type="PDB" id="6ENU">
    <property type="method" value="EM"/>
    <property type="resolution" value="3.10 A"/>
    <property type="chains" value="G=2-177"/>
</dbReference>
<dbReference type="PDB" id="6GBZ">
    <property type="method" value="EM"/>
    <property type="resolution" value="3.80 A"/>
    <property type="chains" value="G=2-177"/>
</dbReference>
<dbReference type="PDB" id="6GC0">
    <property type="method" value="EM"/>
    <property type="resolution" value="3.80 A"/>
    <property type="chains" value="G=2-177"/>
</dbReference>
<dbReference type="PDB" id="6GC4">
    <property type="method" value="EM"/>
    <property type="resolution" value="4.30 A"/>
    <property type="chains" value="G=2-177"/>
</dbReference>
<dbReference type="PDB" id="6GC6">
    <property type="method" value="EM"/>
    <property type="resolution" value="4.30 A"/>
    <property type="chains" value="G=2-177"/>
</dbReference>
<dbReference type="PDB" id="6GC8">
    <property type="method" value="EM"/>
    <property type="resolution" value="3.80 A"/>
    <property type="chains" value="G=2-177"/>
</dbReference>
<dbReference type="PDB" id="6GWT">
    <property type="method" value="EM"/>
    <property type="resolution" value="3.80 A"/>
    <property type="chains" value="G=2-177"/>
</dbReference>
<dbReference type="PDB" id="6GXM">
    <property type="method" value="EM"/>
    <property type="resolution" value="3.80 A"/>
    <property type="chains" value="G=2-177"/>
</dbReference>
<dbReference type="PDB" id="6GXN">
    <property type="method" value="EM"/>
    <property type="resolution" value="3.90 A"/>
    <property type="chains" value="G=2-177"/>
</dbReference>
<dbReference type="PDB" id="6GXO">
    <property type="method" value="EM"/>
    <property type="resolution" value="3.90 A"/>
    <property type="chains" value="G=2-177"/>
</dbReference>
<dbReference type="PDB" id="6GXP">
    <property type="method" value="EM"/>
    <property type="resolution" value="4.40 A"/>
    <property type="chains" value="G=2-177"/>
</dbReference>
<dbReference type="PDB" id="6H4N">
    <property type="method" value="EM"/>
    <property type="resolution" value="3.00 A"/>
    <property type="chains" value="G=2-177"/>
</dbReference>
<dbReference type="PDB" id="6H58">
    <property type="method" value="EM"/>
    <property type="resolution" value="7.90 A"/>
    <property type="chains" value="G/GG=2-177"/>
</dbReference>
<dbReference type="PDB" id="6HRM">
    <property type="method" value="EM"/>
    <property type="resolution" value="2.96 A"/>
    <property type="chains" value="F=2-176"/>
</dbReference>
<dbReference type="PDB" id="6I0Y">
    <property type="method" value="EM"/>
    <property type="resolution" value="3.20 A"/>
    <property type="chains" value="G=2-177"/>
</dbReference>
<dbReference type="PDB" id="6I7V">
    <property type="method" value="X-ray"/>
    <property type="resolution" value="2.90 A"/>
    <property type="chains" value="CG/DG=2-177"/>
</dbReference>
<dbReference type="PDB" id="6O9J">
    <property type="method" value="EM"/>
    <property type="resolution" value="3.90 A"/>
    <property type="chains" value="G=2-177"/>
</dbReference>
<dbReference type="PDB" id="6O9K">
    <property type="method" value="EM"/>
    <property type="resolution" value="4.00 A"/>
    <property type="chains" value="H=2-177"/>
</dbReference>
<dbReference type="PDB" id="6OFX">
    <property type="method" value="EM"/>
    <property type="resolution" value="3.30 A"/>
    <property type="chains" value="f=2-177"/>
</dbReference>
<dbReference type="PDB" id="6OG7">
    <property type="method" value="EM"/>
    <property type="resolution" value="3.30 A"/>
    <property type="chains" value="f=2-177"/>
</dbReference>
<dbReference type="PDB" id="6OGF">
    <property type="method" value="EM"/>
    <property type="resolution" value="3.90 A"/>
    <property type="chains" value="f=1-177"/>
</dbReference>
<dbReference type="PDB" id="6OGG">
    <property type="method" value="EM"/>
    <property type="resolution" value="4.20 A"/>
    <property type="chains" value="f=1-177"/>
</dbReference>
<dbReference type="PDB" id="6OGI">
    <property type="method" value="EM"/>
    <property type="resolution" value="3.40 A"/>
    <property type="chains" value="f=1-177"/>
</dbReference>
<dbReference type="PDB" id="6OM6">
    <property type="method" value="EM"/>
    <property type="resolution" value="3.10 A"/>
    <property type="chains" value="F=1-177"/>
</dbReference>
<dbReference type="PDB" id="6ORE">
    <property type="method" value="EM"/>
    <property type="resolution" value="2.90 A"/>
    <property type="chains" value="F=2-176"/>
</dbReference>
<dbReference type="PDB" id="6ORL">
    <property type="method" value="EM"/>
    <property type="resolution" value="3.50 A"/>
    <property type="chains" value="F=2-176"/>
</dbReference>
<dbReference type="PDB" id="6OSK">
    <property type="method" value="EM"/>
    <property type="resolution" value="3.60 A"/>
    <property type="chains" value="F=2-176"/>
</dbReference>
<dbReference type="PDB" id="6OSQ">
    <property type="method" value="EM"/>
    <property type="resolution" value="3.50 A"/>
    <property type="chains" value="F=2-176"/>
</dbReference>
<dbReference type="PDB" id="6OST">
    <property type="method" value="EM"/>
    <property type="resolution" value="4.20 A"/>
    <property type="chains" value="F=2-176"/>
</dbReference>
<dbReference type="PDB" id="6OT3">
    <property type="method" value="EM"/>
    <property type="resolution" value="3.90 A"/>
    <property type="chains" value="F=2-176"/>
</dbReference>
<dbReference type="PDB" id="6OUO">
    <property type="method" value="EM"/>
    <property type="resolution" value="3.70 A"/>
    <property type="chains" value="F=2-176"/>
</dbReference>
<dbReference type="PDB" id="6PJ6">
    <property type="method" value="EM"/>
    <property type="resolution" value="2.20 A"/>
    <property type="chains" value="O=2-177"/>
</dbReference>
<dbReference type="PDB" id="6Q97">
    <property type="method" value="EM"/>
    <property type="resolution" value="3.90 A"/>
    <property type="chains" value="F=2-176"/>
</dbReference>
<dbReference type="PDB" id="6Q98">
    <property type="method" value="EM"/>
    <property type="resolution" value="4.30 A"/>
    <property type="chains" value="F=1-177"/>
</dbReference>
<dbReference type="PDB" id="6Q9A">
    <property type="method" value="EM"/>
    <property type="resolution" value="3.70 A"/>
    <property type="chains" value="F=2-176"/>
</dbReference>
<dbReference type="PDB" id="6QDW">
    <property type="method" value="EM"/>
    <property type="resolution" value="2.83 A"/>
    <property type="chains" value="g=1-177"/>
</dbReference>
<dbReference type="PDB" id="6QUL">
    <property type="method" value="EM"/>
    <property type="resolution" value="3.00 A"/>
    <property type="chains" value="G=1-177"/>
</dbReference>
<dbReference type="PDB" id="6S0K">
    <property type="method" value="EM"/>
    <property type="resolution" value="3.10 A"/>
    <property type="chains" value="G=1-177"/>
</dbReference>
<dbReference type="PDB" id="6SZS">
    <property type="method" value="EM"/>
    <property type="resolution" value="3.06 A"/>
    <property type="chains" value="G=1-177"/>
</dbReference>
<dbReference type="PDB" id="6TBV">
    <property type="method" value="EM"/>
    <property type="resolution" value="2.70 A"/>
    <property type="chains" value="L061=1-177"/>
</dbReference>
<dbReference type="PDB" id="6TC3">
    <property type="method" value="EM"/>
    <property type="resolution" value="2.70 A"/>
    <property type="chains" value="L061=1-177"/>
</dbReference>
<dbReference type="PDB" id="6U48">
    <property type="method" value="EM"/>
    <property type="resolution" value="2.87 A"/>
    <property type="chains" value="CG=2-177"/>
</dbReference>
<dbReference type="PDB" id="6VU3">
    <property type="method" value="EM"/>
    <property type="resolution" value="3.70 A"/>
    <property type="chains" value="p=2-176"/>
</dbReference>
<dbReference type="PDB" id="6VWL">
    <property type="method" value="EM"/>
    <property type="resolution" value="3.10 A"/>
    <property type="chains" value="E=1-177"/>
</dbReference>
<dbReference type="PDB" id="6VWM">
    <property type="method" value="EM"/>
    <property type="resolution" value="3.40 A"/>
    <property type="chains" value="E=1-177"/>
</dbReference>
<dbReference type="PDB" id="6VWN">
    <property type="method" value="EM"/>
    <property type="resolution" value="3.40 A"/>
    <property type="chains" value="E=1-177"/>
</dbReference>
<dbReference type="PDB" id="6VYQ">
    <property type="method" value="EM"/>
    <property type="resolution" value="3.70 A"/>
    <property type="chains" value="p=1-177"/>
</dbReference>
<dbReference type="PDB" id="6VYR">
    <property type="method" value="EM"/>
    <property type="resolution" value="3.80 A"/>
    <property type="chains" value="p=1-177"/>
</dbReference>
<dbReference type="PDB" id="6VYS">
    <property type="method" value="EM"/>
    <property type="resolution" value="3.70 A"/>
    <property type="chains" value="p=1-177"/>
</dbReference>
<dbReference type="PDB" id="6VYT">
    <property type="method" value="EM"/>
    <property type="resolution" value="14.00 A"/>
    <property type="chains" value="p=1-177"/>
</dbReference>
<dbReference type="PDB" id="6VYU">
    <property type="method" value="EM"/>
    <property type="resolution" value="7.00 A"/>
    <property type="chains" value="p=1-177"/>
</dbReference>
<dbReference type="PDB" id="6VYW">
    <property type="method" value="EM"/>
    <property type="resolution" value="7.00 A"/>
    <property type="chains" value="p=1-177"/>
</dbReference>
<dbReference type="PDB" id="6VYX">
    <property type="method" value="EM"/>
    <property type="resolution" value="9.90 A"/>
    <property type="chains" value="p=1-177"/>
</dbReference>
<dbReference type="PDB" id="6VYY">
    <property type="method" value="EM"/>
    <property type="resolution" value="9.90 A"/>
    <property type="chains" value="p=1-177"/>
</dbReference>
<dbReference type="PDB" id="6VYZ">
    <property type="method" value="EM"/>
    <property type="resolution" value="9.90 A"/>
    <property type="chains" value="p=1-177"/>
</dbReference>
<dbReference type="PDB" id="6VZ2">
    <property type="method" value="EM"/>
    <property type="resolution" value="10.00 A"/>
    <property type="chains" value="p=1-177"/>
</dbReference>
<dbReference type="PDB" id="6VZ3">
    <property type="method" value="EM"/>
    <property type="resolution" value="8.90 A"/>
    <property type="chains" value="p=2-176"/>
</dbReference>
<dbReference type="PDB" id="6VZ5">
    <property type="method" value="EM"/>
    <property type="resolution" value="8.90 A"/>
    <property type="chains" value="p=1-177"/>
</dbReference>
<dbReference type="PDB" id="6VZ7">
    <property type="method" value="EM"/>
    <property type="resolution" value="7.00 A"/>
    <property type="chains" value="p=2-176"/>
</dbReference>
<dbReference type="PDB" id="6VZJ">
    <property type="method" value="EM"/>
    <property type="resolution" value="4.10 A"/>
    <property type="chains" value="p=2-176"/>
</dbReference>
<dbReference type="PDB" id="6WD0">
    <property type="method" value="EM"/>
    <property type="resolution" value="3.00 A"/>
    <property type="chains" value="f=2-177"/>
</dbReference>
<dbReference type="PDB" id="6WD1">
    <property type="method" value="EM"/>
    <property type="resolution" value="3.30 A"/>
    <property type="chains" value="f=2-177"/>
</dbReference>
<dbReference type="PDB" id="6WD2">
    <property type="method" value="EM"/>
    <property type="resolution" value="3.60 A"/>
    <property type="chains" value="f=2-177"/>
</dbReference>
<dbReference type="PDB" id="6WD3">
    <property type="method" value="EM"/>
    <property type="resolution" value="3.60 A"/>
    <property type="chains" value="f=2-177"/>
</dbReference>
<dbReference type="PDB" id="6WD4">
    <property type="method" value="EM"/>
    <property type="resolution" value="3.70 A"/>
    <property type="chains" value="f=2-177"/>
</dbReference>
<dbReference type="PDB" id="6WD5">
    <property type="method" value="EM"/>
    <property type="resolution" value="3.60 A"/>
    <property type="chains" value="f=2-177"/>
</dbReference>
<dbReference type="PDB" id="6WD6">
    <property type="method" value="EM"/>
    <property type="resolution" value="3.70 A"/>
    <property type="chains" value="f=2-177"/>
</dbReference>
<dbReference type="PDB" id="6WD7">
    <property type="method" value="EM"/>
    <property type="resolution" value="3.90 A"/>
    <property type="chains" value="f=2-177"/>
</dbReference>
<dbReference type="PDB" id="6WD8">
    <property type="method" value="EM"/>
    <property type="resolution" value="3.70 A"/>
    <property type="chains" value="f=2-177"/>
</dbReference>
<dbReference type="PDB" id="6WD9">
    <property type="method" value="EM"/>
    <property type="resolution" value="3.70 A"/>
    <property type="chains" value="f=2-177"/>
</dbReference>
<dbReference type="PDB" id="6WDA">
    <property type="method" value="EM"/>
    <property type="resolution" value="3.80 A"/>
    <property type="chains" value="f=2-177"/>
</dbReference>
<dbReference type="PDB" id="6WDB">
    <property type="method" value="EM"/>
    <property type="resolution" value="4.00 A"/>
    <property type="chains" value="f=2-177"/>
</dbReference>
<dbReference type="PDB" id="6WDC">
    <property type="method" value="EM"/>
    <property type="resolution" value="4.20 A"/>
    <property type="chains" value="f=2-177"/>
</dbReference>
<dbReference type="PDB" id="6WDD">
    <property type="method" value="EM"/>
    <property type="resolution" value="3.20 A"/>
    <property type="chains" value="f=2-177"/>
</dbReference>
<dbReference type="PDB" id="6WDE">
    <property type="method" value="EM"/>
    <property type="resolution" value="3.00 A"/>
    <property type="chains" value="f=2-177"/>
</dbReference>
<dbReference type="PDB" id="6WDF">
    <property type="method" value="EM"/>
    <property type="resolution" value="3.30 A"/>
    <property type="chains" value="f=2-177"/>
</dbReference>
<dbReference type="PDB" id="6WDG">
    <property type="method" value="EM"/>
    <property type="resolution" value="3.30 A"/>
    <property type="chains" value="f=2-177"/>
</dbReference>
<dbReference type="PDB" id="6WDH">
    <property type="method" value="EM"/>
    <property type="resolution" value="4.30 A"/>
    <property type="chains" value="f=2-177"/>
</dbReference>
<dbReference type="PDB" id="6WDI">
    <property type="method" value="EM"/>
    <property type="resolution" value="4.00 A"/>
    <property type="chains" value="f=2-177"/>
</dbReference>
<dbReference type="PDB" id="6WDJ">
    <property type="method" value="EM"/>
    <property type="resolution" value="3.70 A"/>
    <property type="chains" value="f=2-177"/>
</dbReference>
<dbReference type="PDB" id="6WDK">
    <property type="method" value="EM"/>
    <property type="resolution" value="3.60 A"/>
    <property type="chains" value="f=2-177"/>
</dbReference>
<dbReference type="PDB" id="6WDL">
    <property type="method" value="EM"/>
    <property type="resolution" value="3.70 A"/>
    <property type="chains" value="f=2-177"/>
</dbReference>
<dbReference type="PDB" id="6WDM">
    <property type="method" value="EM"/>
    <property type="resolution" value="3.60 A"/>
    <property type="chains" value="f=2-177"/>
</dbReference>
<dbReference type="PDB" id="6WNT">
    <property type="method" value="EM"/>
    <property type="resolution" value="3.10 A"/>
    <property type="chains" value="f=2-177"/>
</dbReference>
<dbReference type="PDB" id="6WNV">
    <property type="method" value="EM"/>
    <property type="resolution" value="3.50 A"/>
    <property type="chains" value="f=2-177"/>
</dbReference>
<dbReference type="PDB" id="6WNW">
    <property type="method" value="EM"/>
    <property type="resolution" value="3.20 A"/>
    <property type="chains" value="f=2-177"/>
</dbReference>
<dbReference type="PDB" id="6X6T">
    <property type="method" value="EM"/>
    <property type="resolution" value="3.20 A"/>
    <property type="chains" value="p=1-177"/>
</dbReference>
<dbReference type="PDB" id="6X7F">
    <property type="method" value="EM"/>
    <property type="resolution" value="3.50 A"/>
    <property type="chains" value="p=1-177"/>
</dbReference>
<dbReference type="PDB" id="6X7K">
    <property type="method" value="EM"/>
    <property type="resolution" value="3.10 A"/>
    <property type="chains" value="p=1-177"/>
</dbReference>
<dbReference type="PDB" id="6X9Q">
    <property type="method" value="EM"/>
    <property type="resolution" value="4.80 A"/>
    <property type="chains" value="p=1-177"/>
</dbReference>
<dbReference type="PDB" id="6XDQ">
    <property type="method" value="EM"/>
    <property type="resolution" value="3.70 A"/>
    <property type="chains" value="p=1-177"/>
</dbReference>
<dbReference type="PDB" id="6XDR">
    <property type="method" value="EM"/>
    <property type="resolution" value="4.70 A"/>
    <property type="chains" value="p=1-177"/>
</dbReference>
<dbReference type="PDB" id="6XGF">
    <property type="method" value="EM"/>
    <property type="resolution" value="5.00 A"/>
    <property type="chains" value="p=1-177"/>
</dbReference>
<dbReference type="PDB" id="6XII">
    <property type="method" value="EM"/>
    <property type="resolution" value="7.00 A"/>
    <property type="chains" value="p=1-177"/>
</dbReference>
<dbReference type="PDB" id="6XIJ">
    <property type="method" value="EM"/>
    <property type="resolution" value="8.00 A"/>
    <property type="chains" value="p=1-177"/>
</dbReference>
<dbReference type="PDB" id="6XZ7">
    <property type="method" value="EM"/>
    <property type="resolution" value="2.10 A"/>
    <property type="chains" value="G=2-177"/>
</dbReference>
<dbReference type="PDB" id="6XZA">
    <property type="method" value="EM"/>
    <property type="resolution" value="2.66 A"/>
    <property type="chains" value="G2=2-177"/>
</dbReference>
<dbReference type="PDB" id="6XZB">
    <property type="method" value="EM"/>
    <property type="resolution" value="2.54 A"/>
    <property type="chains" value="G2=2-177"/>
</dbReference>
<dbReference type="PDB" id="6Y69">
    <property type="method" value="EM"/>
    <property type="resolution" value="2.86 A"/>
    <property type="chains" value="G=2-177"/>
</dbReference>
<dbReference type="PDB" id="6YS3">
    <property type="method" value="EM"/>
    <property type="resolution" value="2.58 A"/>
    <property type="chains" value="g=1-177"/>
</dbReference>
<dbReference type="PDB" id="6YSR">
    <property type="method" value="EM"/>
    <property type="resolution" value="3.10 A"/>
    <property type="chains" value="G=1-177"/>
</dbReference>
<dbReference type="PDB" id="6YSS">
    <property type="method" value="EM"/>
    <property type="resolution" value="2.60 A"/>
    <property type="chains" value="G=1-177"/>
</dbReference>
<dbReference type="PDB" id="6YST">
    <property type="method" value="EM"/>
    <property type="resolution" value="3.20 A"/>
    <property type="chains" value="G=1-177"/>
</dbReference>
<dbReference type="PDB" id="6YSU">
    <property type="method" value="EM"/>
    <property type="resolution" value="3.70 A"/>
    <property type="chains" value="G=1-177"/>
</dbReference>
<dbReference type="PDB" id="6ZTJ">
    <property type="method" value="EM"/>
    <property type="resolution" value="3.40 A"/>
    <property type="chains" value="BG=1-177"/>
</dbReference>
<dbReference type="PDB" id="6ZTL">
    <property type="method" value="EM"/>
    <property type="resolution" value="3.50 A"/>
    <property type="chains" value="BG=1-177"/>
</dbReference>
<dbReference type="PDB" id="6ZTM">
    <property type="method" value="EM"/>
    <property type="resolution" value="3.30 A"/>
    <property type="chains" value="BG=1-177"/>
</dbReference>
<dbReference type="PDB" id="6ZTN">
    <property type="method" value="EM"/>
    <property type="resolution" value="3.90 A"/>
    <property type="chains" value="BG=1-177"/>
</dbReference>
<dbReference type="PDB" id="6ZTO">
    <property type="method" value="EM"/>
    <property type="resolution" value="3.00 A"/>
    <property type="chains" value="BG=1-177"/>
</dbReference>
<dbReference type="PDB" id="6ZTP">
    <property type="method" value="EM"/>
    <property type="resolution" value="3.00 A"/>
    <property type="chains" value="BG=1-177"/>
</dbReference>
<dbReference type="PDB" id="6ZU1">
    <property type="method" value="EM"/>
    <property type="resolution" value="3.00 A"/>
    <property type="chains" value="BG=1-177"/>
</dbReference>
<dbReference type="PDB" id="7ABZ">
    <property type="method" value="EM"/>
    <property type="resolution" value="3.21 A"/>
    <property type="chains" value="F=2-177"/>
</dbReference>
<dbReference type="PDB" id="7AC7">
    <property type="method" value="EM"/>
    <property type="resolution" value="3.08 A"/>
    <property type="chains" value="F=2-176"/>
</dbReference>
<dbReference type="PDB" id="7ACJ">
    <property type="method" value="EM"/>
    <property type="resolution" value="3.20 A"/>
    <property type="chains" value="F=2-176"/>
</dbReference>
<dbReference type="PDB" id="7ACR">
    <property type="method" value="EM"/>
    <property type="resolution" value="3.44 A"/>
    <property type="chains" value="F=2-176"/>
</dbReference>
<dbReference type="PDB" id="7B5K">
    <property type="method" value="EM"/>
    <property type="resolution" value="2.90 A"/>
    <property type="chains" value="G=2-177"/>
</dbReference>
<dbReference type="PDB" id="7BL2">
    <property type="method" value="EM"/>
    <property type="resolution" value="3.70 A"/>
    <property type="chains" value="G=1-177"/>
</dbReference>
<dbReference type="PDB" id="7BL3">
    <property type="method" value="EM"/>
    <property type="resolution" value="3.50 A"/>
    <property type="chains" value="G=1-177"/>
</dbReference>
<dbReference type="PDB" id="7BL4">
    <property type="method" value="EM"/>
    <property type="resolution" value="2.40 A"/>
    <property type="chains" value="G=1-177"/>
</dbReference>
<dbReference type="PDB" id="7BL5">
    <property type="method" value="EM"/>
    <property type="resolution" value="3.30 A"/>
    <property type="chains" value="G=1-177"/>
</dbReference>
<dbReference type="PDB" id="7BL6">
    <property type="method" value="EM"/>
    <property type="resolution" value="4.00 A"/>
    <property type="chains" value="G=1-177"/>
</dbReference>
<dbReference type="PDB" id="7BV8">
    <property type="method" value="EM"/>
    <property type="resolution" value="3.14 A"/>
    <property type="chains" value="G=1-177"/>
</dbReference>
<dbReference type="PDB" id="7D6Z">
    <property type="method" value="EM"/>
    <property type="resolution" value="3.40 A"/>
    <property type="chains" value="G=1-177"/>
</dbReference>
<dbReference type="PDB" id="7D80">
    <property type="method" value="EM"/>
    <property type="resolution" value="4.10 A"/>
    <property type="chains" value="f=1-177"/>
</dbReference>
<dbReference type="PDB" id="7JSS">
    <property type="method" value="EM"/>
    <property type="resolution" value="3.70 A"/>
    <property type="chains" value="f=2-177"/>
</dbReference>
<dbReference type="PDB" id="7JSW">
    <property type="method" value="EM"/>
    <property type="resolution" value="3.80 A"/>
    <property type="chains" value="f=2-177"/>
</dbReference>
<dbReference type="PDB" id="7JSZ">
    <property type="method" value="EM"/>
    <property type="resolution" value="3.70 A"/>
    <property type="chains" value="f=2-177"/>
</dbReference>
<dbReference type="PDB" id="7JT1">
    <property type="method" value="EM"/>
    <property type="resolution" value="3.30 A"/>
    <property type="chains" value="f=2-177"/>
</dbReference>
<dbReference type="PDB" id="7JT2">
    <property type="method" value="EM"/>
    <property type="resolution" value="3.50 A"/>
    <property type="chains" value="f=2-177"/>
</dbReference>
<dbReference type="PDB" id="7JT3">
    <property type="method" value="EM"/>
    <property type="resolution" value="3.70 A"/>
    <property type="chains" value="f=2-177"/>
</dbReference>
<dbReference type="PDB" id="7K00">
    <property type="method" value="EM"/>
    <property type="resolution" value="1.98 A"/>
    <property type="chains" value="g=1-177"/>
</dbReference>
<dbReference type="PDB" id="7K50">
    <property type="method" value="EM"/>
    <property type="resolution" value="3.40 A"/>
    <property type="chains" value="f=2-177"/>
</dbReference>
<dbReference type="PDB" id="7K51">
    <property type="method" value="EM"/>
    <property type="resolution" value="3.50 A"/>
    <property type="chains" value="f=2-177"/>
</dbReference>
<dbReference type="PDB" id="7K52">
    <property type="method" value="EM"/>
    <property type="resolution" value="3.40 A"/>
    <property type="chains" value="f=2-177"/>
</dbReference>
<dbReference type="PDB" id="7K53">
    <property type="method" value="EM"/>
    <property type="resolution" value="3.20 A"/>
    <property type="chains" value="f=2-177"/>
</dbReference>
<dbReference type="PDB" id="7K54">
    <property type="method" value="EM"/>
    <property type="resolution" value="3.20 A"/>
    <property type="chains" value="f=2-177"/>
</dbReference>
<dbReference type="PDB" id="7K55">
    <property type="method" value="EM"/>
    <property type="resolution" value="3.30 A"/>
    <property type="chains" value="f=2-177"/>
</dbReference>
<dbReference type="PDB" id="7LV0">
    <property type="method" value="EM"/>
    <property type="resolution" value="3.20 A"/>
    <property type="chains" value="f=2-177"/>
</dbReference>
<dbReference type="PDB" id="7LVK">
    <property type="method" value="EM"/>
    <property type="resolution" value="2.20 A"/>
    <property type="chains" value="O=1-177"/>
</dbReference>
<dbReference type="PDB" id="7M5D">
    <property type="method" value="EM"/>
    <property type="resolution" value="2.80 A"/>
    <property type="chains" value="F=2-176"/>
</dbReference>
<dbReference type="PDB" id="7N1P">
    <property type="method" value="EM"/>
    <property type="resolution" value="2.33 A"/>
    <property type="chains" value="LF=1-177"/>
</dbReference>
<dbReference type="PDB" id="7N2C">
    <property type="method" value="EM"/>
    <property type="resolution" value="2.72 A"/>
    <property type="chains" value="LF=1-177"/>
</dbReference>
<dbReference type="PDB" id="7N2U">
    <property type="method" value="EM"/>
    <property type="resolution" value="2.53 A"/>
    <property type="chains" value="LF=1-177"/>
</dbReference>
<dbReference type="PDB" id="7N2V">
    <property type="method" value="EM"/>
    <property type="resolution" value="2.54 A"/>
    <property type="chains" value="LF=1-177"/>
</dbReference>
<dbReference type="PDB" id="7N30">
    <property type="method" value="EM"/>
    <property type="resolution" value="2.66 A"/>
    <property type="chains" value="LF=1-177"/>
</dbReference>
<dbReference type="PDB" id="7N31">
    <property type="method" value="EM"/>
    <property type="resolution" value="2.69 A"/>
    <property type="chains" value="LF=1-177"/>
</dbReference>
<dbReference type="PDB" id="7NBU">
    <property type="method" value="EM"/>
    <property type="resolution" value="3.11 A"/>
    <property type="chains" value="g=2-177"/>
</dbReference>
<dbReference type="PDB" id="7NWT">
    <property type="method" value="EM"/>
    <property type="resolution" value="2.66 A"/>
    <property type="chains" value="F=1-177"/>
</dbReference>
<dbReference type="PDB" id="7O19">
    <property type="method" value="EM"/>
    <property type="resolution" value="2.90 A"/>
    <property type="chains" value="BG=1-177"/>
</dbReference>
<dbReference type="PDB" id="7O1A">
    <property type="method" value="EM"/>
    <property type="resolution" value="2.40 A"/>
    <property type="chains" value="BG=1-177"/>
</dbReference>
<dbReference type="PDB" id="7O1C">
    <property type="method" value="EM"/>
    <property type="resolution" value="2.60 A"/>
    <property type="chains" value="BG=1-177"/>
</dbReference>
<dbReference type="PDB" id="7OIZ">
    <property type="method" value="EM"/>
    <property type="resolution" value="2.90 A"/>
    <property type="chains" value="g=1-177"/>
</dbReference>
<dbReference type="PDB" id="7OJ0">
    <property type="method" value="EM"/>
    <property type="resolution" value="3.50 A"/>
    <property type="chains" value="g=1-177"/>
</dbReference>
<dbReference type="PDB" id="7P3K">
    <property type="method" value="EM"/>
    <property type="resolution" value="2.90 A"/>
    <property type="chains" value="g=1-177"/>
</dbReference>
<dbReference type="PDB" id="7PJS">
    <property type="method" value="EM"/>
    <property type="resolution" value="2.35 A"/>
    <property type="chains" value="G=1-177"/>
</dbReference>
<dbReference type="PDB" id="7PJT">
    <property type="method" value="EM"/>
    <property type="resolution" value="6.00 A"/>
    <property type="chains" value="G=1-177"/>
</dbReference>
<dbReference type="PDB" id="7PJU">
    <property type="method" value="EM"/>
    <property type="resolution" value="9.50 A"/>
    <property type="chains" value="G=1-177"/>
</dbReference>
<dbReference type="PDB" id="7PJV">
    <property type="method" value="EM"/>
    <property type="resolution" value="3.10 A"/>
    <property type="chains" value="G=1-177"/>
</dbReference>
<dbReference type="PDB" id="7PJW">
    <property type="method" value="EM"/>
    <property type="resolution" value="4.00 A"/>
    <property type="chains" value="G=1-177"/>
</dbReference>
<dbReference type="PDB" id="7PJX">
    <property type="method" value="EM"/>
    <property type="resolution" value="6.50 A"/>
    <property type="chains" value="G=1-177"/>
</dbReference>
<dbReference type="PDB" id="7PJY">
    <property type="method" value="EM"/>
    <property type="resolution" value="3.10 A"/>
    <property type="chains" value="G=1-177"/>
</dbReference>
<dbReference type="PDB" id="7PJZ">
    <property type="method" value="EM"/>
    <property type="resolution" value="6.00 A"/>
    <property type="chains" value="G=1-177"/>
</dbReference>
<dbReference type="PDB" id="7Q4K">
    <property type="method" value="EM"/>
    <property type="resolution" value="3.00 A"/>
    <property type="chains" value="BG=1-177"/>
</dbReference>
<dbReference type="PDB" id="7QG8">
    <property type="method" value="EM"/>
    <property type="resolution" value="3.97 A"/>
    <property type="chains" value="T=1-177"/>
</dbReference>
<dbReference type="PDB" id="7QGH">
    <property type="method" value="EM"/>
    <property type="resolution" value="4.48 A"/>
    <property type="chains" value="T=1-177"/>
</dbReference>
<dbReference type="PDB" id="7QGN">
    <property type="method" value="EM"/>
    <property type="resolution" value="3.37 A"/>
    <property type="chains" value="T=1-177"/>
</dbReference>
<dbReference type="PDB" id="7QGR">
    <property type="method" value="EM"/>
    <property type="resolution" value="5.70 A"/>
    <property type="chains" value="T=1-177"/>
</dbReference>
<dbReference type="PDB" id="7QQ3">
    <property type="method" value="EM"/>
    <property type="resolution" value="2.10 A"/>
    <property type="chains" value="O=1-177"/>
</dbReference>
<dbReference type="PDB" id="7S1G">
    <property type="method" value="EM"/>
    <property type="resolution" value="2.48 A"/>
    <property type="chains" value="O=1-177"/>
</dbReference>
<dbReference type="PDB" id="7S1H">
    <property type="method" value="EM"/>
    <property type="resolution" value="2.35 A"/>
    <property type="chains" value="O=1-177"/>
</dbReference>
<dbReference type="PDB" id="7S1I">
    <property type="method" value="EM"/>
    <property type="resolution" value="2.48 A"/>
    <property type="chains" value="O=1-177"/>
</dbReference>
<dbReference type="PDB" id="7S1J">
    <property type="method" value="EM"/>
    <property type="resolution" value="2.47 A"/>
    <property type="chains" value="O=1-177"/>
</dbReference>
<dbReference type="PDB" id="7S1K">
    <property type="method" value="EM"/>
    <property type="resolution" value="2.42 A"/>
    <property type="chains" value="O=1-177"/>
</dbReference>
<dbReference type="PDB" id="7SA4">
    <property type="method" value="EM"/>
    <property type="resolution" value="2.55 A"/>
    <property type="chains" value="F=1-177"/>
</dbReference>
<dbReference type="PDB" id="7SS9">
    <property type="method" value="EM"/>
    <property type="resolution" value="3.90 A"/>
    <property type="chains" value="f=2-177"/>
</dbReference>
<dbReference type="PDB" id="7SSD">
    <property type="method" value="EM"/>
    <property type="resolution" value="3.30 A"/>
    <property type="chains" value="f=2-177"/>
</dbReference>
<dbReference type="PDB" id="7SSL">
    <property type="method" value="EM"/>
    <property type="resolution" value="3.80 A"/>
    <property type="chains" value="f=2-177"/>
</dbReference>
<dbReference type="PDB" id="7SSN">
    <property type="method" value="EM"/>
    <property type="resolution" value="3.20 A"/>
    <property type="chains" value="f=2-177"/>
</dbReference>
<dbReference type="PDB" id="7SSO">
    <property type="method" value="EM"/>
    <property type="resolution" value="3.20 A"/>
    <property type="chains" value="f=2-177"/>
</dbReference>
<dbReference type="PDB" id="7SSW">
    <property type="method" value="EM"/>
    <property type="resolution" value="3.80 A"/>
    <property type="chains" value="f=2-177"/>
</dbReference>
<dbReference type="PDB" id="7ST2">
    <property type="method" value="EM"/>
    <property type="resolution" value="2.90 A"/>
    <property type="chains" value="f=2-177"/>
</dbReference>
<dbReference type="PDB" id="7ST6">
    <property type="method" value="EM"/>
    <property type="resolution" value="3.00 A"/>
    <property type="chains" value="f=2-177"/>
</dbReference>
<dbReference type="PDB" id="7ST7">
    <property type="method" value="EM"/>
    <property type="resolution" value="3.20 A"/>
    <property type="chains" value="f=2-177"/>
</dbReference>
<dbReference type="PDB" id="7TOS">
    <property type="method" value="EM"/>
    <property type="resolution" value="2.90 A"/>
    <property type="chains" value="L06=2-177"/>
</dbReference>
<dbReference type="PDB" id="7UG7">
    <property type="method" value="EM"/>
    <property type="resolution" value="2.58 A"/>
    <property type="chains" value="LF=1-177"/>
</dbReference>
<dbReference type="PDB" id="7UPH">
    <property type="method" value="EM"/>
    <property type="resolution" value="4.18 A"/>
    <property type="chains" value="O=2-177"/>
</dbReference>
<dbReference type="PDB" id="7Y7C">
    <property type="method" value="EM"/>
    <property type="resolution" value="2.51 A"/>
    <property type="chains" value="g=1-177"/>
</dbReference>
<dbReference type="PDB" id="7Y7D">
    <property type="method" value="EM"/>
    <property type="resolution" value="2.58 A"/>
    <property type="chains" value="g=1-177"/>
</dbReference>
<dbReference type="PDB" id="7Y7E">
    <property type="method" value="EM"/>
    <property type="resolution" value="2.41 A"/>
    <property type="chains" value="g=1-177"/>
</dbReference>
<dbReference type="PDB" id="7Y7F">
    <property type="method" value="EM"/>
    <property type="resolution" value="2.43 A"/>
    <property type="chains" value="g=1-177"/>
</dbReference>
<dbReference type="PDB" id="7Y7G">
    <property type="method" value="EM"/>
    <property type="resolution" value="2.34 A"/>
    <property type="chains" value="g=1-177"/>
</dbReference>
<dbReference type="PDB" id="7Y7H">
    <property type="method" value="EM"/>
    <property type="resolution" value="2.51 A"/>
    <property type="chains" value="g=1-177"/>
</dbReference>
<dbReference type="PDB" id="7Z20">
    <property type="method" value="EM"/>
    <property type="resolution" value="2.29 A"/>
    <property type="chains" value="g=1-177"/>
</dbReference>
<dbReference type="PDB" id="7ZOD">
    <property type="method" value="EM"/>
    <property type="resolution" value="2.56 A"/>
    <property type="chains" value="g=1-177"/>
</dbReference>
<dbReference type="PDB" id="7ZP8">
    <property type="method" value="EM"/>
    <property type="resolution" value="2.20 A"/>
    <property type="chains" value="g=1-177"/>
</dbReference>
<dbReference type="PDB" id="7ZQ5">
    <property type="method" value="EM"/>
    <property type="resolution" value="2.70 A"/>
    <property type="chains" value="g=1-177"/>
</dbReference>
<dbReference type="PDB" id="7ZQ6">
    <property type="method" value="EM"/>
    <property type="resolution" value="2.75 A"/>
    <property type="chains" value="g=1-177"/>
</dbReference>
<dbReference type="PDB" id="7ZTA">
    <property type="method" value="EM"/>
    <property type="resolution" value="2.70 A"/>
    <property type="chains" value="L061=2-177"/>
</dbReference>
<dbReference type="PDB" id="8A3L">
    <property type="method" value="EM"/>
    <property type="resolution" value="3.42 A"/>
    <property type="chains" value="g=1-177"/>
</dbReference>
<dbReference type="PDB" id="8AKN">
    <property type="method" value="EM"/>
    <property type="resolution" value="2.30 A"/>
    <property type="chains" value="g=1-177"/>
</dbReference>
<dbReference type="PDB" id="8AM9">
    <property type="method" value="EM"/>
    <property type="resolution" value="2.80 A"/>
    <property type="chains" value="g=1-177"/>
</dbReference>
<dbReference type="PDB" id="8ANA">
    <property type="method" value="EM"/>
    <property type="resolution" value="2.10 A"/>
    <property type="chains" value="g=1-177"/>
</dbReference>
<dbReference type="PDB" id="8AP4">
    <property type="method" value="EM"/>
    <property type="resolution" value="3.00 A"/>
    <property type="chains" value="g=1-177"/>
</dbReference>
<dbReference type="PDB" id="8AYE">
    <property type="method" value="EM"/>
    <property type="resolution" value="1.96 A"/>
    <property type="chains" value="g=1-177"/>
</dbReference>
<dbReference type="PDB" id="8B0X">
    <property type="method" value="EM"/>
    <property type="resolution" value="1.55 A"/>
    <property type="chains" value="g=1-177"/>
</dbReference>
<dbReference type="PDB" id="8B7Y">
    <property type="method" value="EM"/>
    <property type="resolution" value="3.00 A"/>
    <property type="chains" value="O=1-177"/>
</dbReference>
<dbReference type="PDB" id="8BF7">
    <property type="method" value="EM"/>
    <property type="resolution" value="2.33 A"/>
    <property type="chains" value="E=1-177"/>
</dbReference>
<dbReference type="PDB" id="8BGE">
    <property type="method" value="EM"/>
    <property type="resolution" value="2.11 A"/>
    <property type="chains" value="E=1-177"/>
</dbReference>
<dbReference type="PDB" id="8BGH">
    <property type="method" value="EM"/>
    <property type="resolution" value="2.88 A"/>
    <property type="chains" value="E=1-177"/>
</dbReference>
<dbReference type="PDB" id="8BH4">
    <property type="method" value="EM"/>
    <property type="resolution" value="2.62 A"/>
    <property type="chains" value="E=1-177"/>
</dbReference>
<dbReference type="PDB" id="8BHJ">
    <property type="method" value="EM"/>
    <property type="resolution" value="2.81 A"/>
    <property type="chains" value="E=1-177"/>
</dbReference>
<dbReference type="PDB" id="8BHL">
    <property type="method" value="EM"/>
    <property type="resolution" value="2.21 A"/>
    <property type="chains" value="E=1-177"/>
</dbReference>
<dbReference type="PDB" id="8BHN">
    <property type="method" value="EM"/>
    <property type="resolution" value="2.85 A"/>
    <property type="chains" value="E=1-177"/>
</dbReference>
<dbReference type="PDB" id="8BHP">
    <property type="method" value="EM"/>
    <property type="resolution" value="2.37 A"/>
    <property type="chains" value="E=1-177"/>
</dbReference>
<dbReference type="PDB" id="8BIL">
    <property type="method" value="EM"/>
    <property type="resolution" value="2.04 A"/>
    <property type="chains" value="E=1-177"/>
</dbReference>
<dbReference type="PDB" id="8BIM">
    <property type="method" value="EM"/>
    <property type="resolution" value="2.04 A"/>
    <property type="chains" value="E=1-177"/>
</dbReference>
<dbReference type="PDB" id="8CAM">
    <property type="method" value="EM"/>
    <property type="resolution" value="1.86 A"/>
    <property type="chains" value="g=1-177"/>
</dbReference>
<dbReference type="PDB" id="8CEU">
    <property type="method" value="EM"/>
    <property type="resolution" value="1.83 A"/>
    <property type="chains" value="g=1-177"/>
</dbReference>
<dbReference type="PDB" id="8CGD">
    <property type="method" value="EM"/>
    <property type="resolution" value="1.98 A"/>
    <property type="chains" value="g=1-177"/>
</dbReference>
<dbReference type="PDB" id="8CGK">
    <property type="method" value="EM"/>
    <property type="resolution" value="1.64 A"/>
    <property type="chains" value="g=1-177"/>
</dbReference>
<dbReference type="PDB" id="8CGV">
    <property type="method" value="EM"/>
    <property type="resolution" value="1.66 A"/>
    <property type="chains" value="g=1-177"/>
</dbReference>
<dbReference type="PDB" id="8EIU">
    <property type="method" value="EM"/>
    <property type="resolution" value="2.24 A"/>
    <property type="chains" value="g=1-177"/>
</dbReference>
<dbReference type="PDB" id="8EKC">
    <property type="method" value="EM"/>
    <property type="resolution" value="2.70 A"/>
    <property type="chains" value="G=1-177"/>
</dbReference>
<dbReference type="PDB" id="8EMM">
    <property type="method" value="EM"/>
    <property type="resolution" value="2.10 A"/>
    <property type="chains" value="g=1-177"/>
</dbReference>
<dbReference type="PDB" id="8FIZ">
    <property type="method" value="EM"/>
    <property type="resolution" value="3.80 A"/>
    <property type="chains" value="BJ=1-177"/>
</dbReference>
<dbReference type="PDB" id="8FTO">
    <property type="method" value="EM"/>
    <property type="resolution" value="1.85 A"/>
    <property type="chains" value="g=1-177"/>
</dbReference>
<dbReference type="PDB" id="8FZD">
    <property type="method" value="EM"/>
    <property type="resolution" value="3.10 A"/>
    <property type="chains" value="G=1-177"/>
</dbReference>
<dbReference type="PDB" id="8FZE">
    <property type="method" value="EM"/>
    <property type="resolution" value="3.00 A"/>
    <property type="chains" value="G=1-177"/>
</dbReference>
<dbReference type="PDB" id="8FZF">
    <property type="method" value="EM"/>
    <property type="resolution" value="3.20 A"/>
    <property type="chains" value="G=1-177"/>
</dbReference>
<dbReference type="PDB" id="8FZG">
    <property type="method" value="EM"/>
    <property type="resolution" value="3.10 A"/>
    <property type="chains" value="G=1-177"/>
</dbReference>
<dbReference type="PDB" id="8FZH">
    <property type="method" value="EM"/>
    <property type="resolution" value="2.90 A"/>
    <property type="chains" value="G=1-177"/>
</dbReference>
<dbReference type="PDB" id="8FZI">
    <property type="method" value="EM"/>
    <property type="resolution" value="3.10 A"/>
    <property type="chains" value="G=1-177"/>
</dbReference>
<dbReference type="PDB" id="8FZJ">
    <property type="method" value="EM"/>
    <property type="resolution" value="3.00 A"/>
    <property type="chains" value="G=1-177"/>
</dbReference>
<dbReference type="PDB" id="8G2U">
    <property type="method" value="EM"/>
    <property type="resolution" value="3.00 A"/>
    <property type="chains" value="G=2-177"/>
</dbReference>
<dbReference type="PDB" id="8G31">
    <property type="method" value="EM"/>
    <property type="resolution" value="3.20 A"/>
    <property type="chains" value="G=2-177"/>
</dbReference>
<dbReference type="PDB" id="8G34">
    <property type="method" value="EM"/>
    <property type="resolution" value="3.20 A"/>
    <property type="chains" value="G=2-177"/>
</dbReference>
<dbReference type="PDB" id="8G38">
    <property type="method" value="EM"/>
    <property type="resolution" value="3.20 A"/>
    <property type="chains" value="G=2-177"/>
</dbReference>
<dbReference type="PDB" id="8G6W">
    <property type="method" value="EM"/>
    <property type="resolution" value="2.02 A"/>
    <property type="chains" value="g=1-177"/>
</dbReference>
<dbReference type="PDB" id="8G6X">
    <property type="method" value="EM"/>
    <property type="resolution" value="2.31 A"/>
    <property type="chains" value="g=1-177"/>
</dbReference>
<dbReference type="PDB" id="8G6Y">
    <property type="method" value="EM"/>
    <property type="resolution" value="2.09 A"/>
    <property type="chains" value="g=1-177"/>
</dbReference>
<dbReference type="PDB" id="8G7P">
    <property type="method" value="EM"/>
    <property type="resolution" value="2.90 A"/>
    <property type="chains" value="G=1-177"/>
</dbReference>
<dbReference type="PDB" id="8G7Q">
    <property type="method" value="EM"/>
    <property type="resolution" value="3.10 A"/>
    <property type="chains" value="G=1-177"/>
</dbReference>
<dbReference type="PDB" id="8G7R">
    <property type="method" value="EM"/>
    <property type="resolution" value="2.80 A"/>
    <property type="chains" value="G=1-177"/>
</dbReference>
<dbReference type="PDB" id="8G7S">
    <property type="method" value="EM"/>
    <property type="resolution" value="3.10 A"/>
    <property type="chains" value="G=1-177"/>
</dbReference>
<dbReference type="PDB" id="8HSP">
    <property type="method" value="EM"/>
    <property type="resolution" value="2.32 A"/>
    <property type="chains" value="g=1-177"/>
</dbReference>
<dbReference type="PDB" id="8HTZ">
    <property type="method" value="EM"/>
    <property type="resolution" value="2.40 A"/>
    <property type="chains" value="g=1-177"/>
</dbReference>
<dbReference type="PDB" id="8HU1">
    <property type="method" value="EM"/>
    <property type="resolution" value="2.69 A"/>
    <property type="chains" value="g=1-177"/>
</dbReference>
<dbReference type="PDB" id="8IFB">
    <property type="method" value="EM"/>
    <property type="resolution" value="2.43 A"/>
    <property type="chains" value="g=1-177"/>
</dbReference>
<dbReference type="PDB" id="8IFC">
    <property type="method" value="EM"/>
    <property type="resolution" value="2.90 A"/>
    <property type="chains" value="g=1-177"/>
</dbReference>
<dbReference type="PDB" id="8P16">
    <property type="method" value="EM"/>
    <property type="resolution" value="2.77 A"/>
    <property type="chains" value="F=1-177"/>
</dbReference>
<dbReference type="PDB" id="8P17">
    <property type="method" value="EM"/>
    <property type="resolution" value="2.78 A"/>
    <property type="chains" value="F=1-177"/>
</dbReference>
<dbReference type="PDB" id="8P18">
    <property type="method" value="EM"/>
    <property type="resolution" value="2.77 A"/>
    <property type="chains" value="F=1-177"/>
</dbReference>
<dbReference type="PDB" id="8PEG">
    <property type="method" value="EM"/>
    <property type="resolution" value="3.30 A"/>
    <property type="chains" value="f=1-177"/>
</dbReference>
<dbReference type="PDB" id="8PHJ">
    <property type="method" value="EM"/>
    <property type="resolution" value="3.67 A"/>
    <property type="chains" value="g=1-177"/>
</dbReference>
<dbReference type="PDB" id="8PKL">
    <property type="method" value="EM"/>
    <property type="resolution" value="3.09 A"/>
    <property type="chains" value="f=1-177"/>
</dbReference>
<dbReference type="PDB" id="8PVA">
    <property type="method" value="EM"/>
    <property type="resolution" value="4.50 A"/>
    <property type="chains" value="g=1-177"/>
</dbReference>
<dbReference type="PDB" id="8Q4F">
    <property type="method" value="EM"/>
    <property type="resolution" value="3.10 A"/>
    <property type="chains" value="g=1-177"/>
</dbReference>
<dbReference type="PDB" id="8QBT">
    <property type="method" value="EM"/>
    <property type="resolution" value="2.20 A"/>
    <property type="chains" value="G=1-177"/>
</dbReference>
<dbReference type="PDB" id="8QK7">
    <property type="method" value="EM"/>
    <property type="resolution" value="2.77 A"/>
    <property type="chains" value="F=1-177"/>
</dbReference>
<dbReference type="PDB" id="8QOA">
    <property type="method" value="EM"/>
    <property type="resolution" value="2.00 A"/>
    <property type="chains" value="g=1-177"/>
</dbReference>
<dbReference type="PDB" id="8R6C">
    <property type="method" value="EM"/>
    <property type="resolution" value="2.20 A"/>
    <property type="chains" value="g=1-177"/>
</dbReference>
<dbReference type="PDB" id="8R8M">
    <property type="method" value="EM"/>
    <property type="resolution" value="2.40 A"/>
    <property type="chains" value="g=1-177"/>
</dbReference>
<dbReference type="PDB" id="8RPY">
    <property type="method" value="EM"/>
    <property type="resolution" value="2.64 A"/>
    <property type="chains" value="G=2-177"/>
</dbReference>
<dbReference type="PDB" id="8RPZ">
    <property type="method" value="EM"/>
    <property type="resolution" value="2.44 A"/>
    <property type="chains" value="G=2-177"/>
</dbReference>
<dbReference type="PDB" id="8RQ0">
    <property type="method" value="EM"/>
    <property type="resolution" value="2.44 A"/>
    <property type="chains" value="G=2-177"/>
</dbReference>
<dbReference type="PDB" id="8RQ2">
    <property type="method" value="EM"/>
    <property type="resolution" value="2.44 A"/>
    <property type="chains" value="G=2-177"/>
</dbReference>
<dbReference type="PDB" id="8SYL">
    <property type="method" value="EM"/>
    <property type="resolution" value="2.90 A"/>
    <property type="chains" value="G=1-177"/>
</dbReference>
<dbReference type="PDB" id="8T5D">
    <property type="method" value="EM"/>
    <property type="resolution" value="3.20 A"/>
    <property type="chains" value="G=2-177"/>
</dbReference>
<dbReference type="PDB" id="8T5H">
    <property type="method" value="EM"/>
    <property type="resolution" value="3.30 A"/>
    <property type="chains" value="G=2-177"/>
</dbReference>
<dbReference type="PDB" id="8VS9">
    <property type="method" value="EM"/>
    <property type="resolution" value="3.90 A"/>
    <property type="chains" value="L06=1-177"/>
</dbReference>
<dbReference type="PDB" id="8VSA">
    <property type="method" value="EM"/>
    <property type="resolution" value="3.70 A"/>
    <property type="chains" value="L06=1-177"/>
</dbReference>
<dbReference type="PDB" id="8W51">
    <property type="method" value="EM"/>
    <property type="resolution" value="2.40 A"/>
    <property type="chains" value="G=1-177"/>
</dbReference>
<dbReference type="PDB" id="8YUO">
    <property type="method" value="EM"/>
    <property type="resolution" value="2.25 A"/>
    <property type="chains" value="g=1-177"/>
</dbReference>
<dbReference type="PDB" id="8YUP">
    <property type="method" value="EM"/>
    <property type="resolution" value="2.39 A"/>
    <property type="chains" value="g=1-177"/>
</dbReference>
<dbReference type="PDB" id="8YUQ">
    <property type="method" value="EM"/>
    <property type="resolution" value="2.41 A"/>
    <property type="chains" value="g=1-177"/>
</dbReference>
<dbReference type="PDB" id="8YUR">
    <property type="method" value="EM"/>
    <property type="resolution" value="2.47 A"/>
    <property type="chains" value="g=1-177"/>
</dbReference>
<dbReference type="PDB" id="8YUS">
    <property type="method" value="EM"/>
    <property type="resolution" value="2.43 A"/>
    <property type="chains" value="g=1-177"/>
</dbReference>
<dbReference type="PDB" id="9D89">
    <property type="method" value="EM"/>
    <property type="resolution" value="1.95 A"/>
    <property type="chains" value="g=2-177"/>
</dbReference>
<dbReference type="PDB" id="9FBV">
    <property type="method" value="EM"/>
    <property type="resolution" value="2.40 A"/>
    <property type="chains" value="g=1-177"/>
</dbReference>
<dbReference type="PDB" id="9GFT">
    <property type="method" value="EM"/>
    <property type="resolution" value="3.10 A"/>
    <property type="chains" value="Ab/T=1-177"/>
</dbReference>
<dbReference type="PDB" id="9GGR">
    <property type="method" value="EM"/>
    <property type="resolution" value="3.20 A"/>
    <property type="chains" value="Ab/T=1-177"/>
</dbReference>
<dbReference type="PDB" id="9H3L">
    <property type="method" value="EM"/>
    <property type="resolution" value="5.84 A"/>
    <property type="chains" value="G=2-177"/>
</dbReference>
<dbReference type="PDB" id="9H3O">
    <property type="method" value="EM"/>
    <property type="resolution" value="4.54 A"/>
    <property type="chains" value="G=2-177"/>
</dbReference>
<dbReference type="PDB" id="9H3P">
    <property type="method" value="EM"/>
    <property type="resolution" value="7.06 A"/>
    <property type="chains" value="G=2-177"/>
</dbReference>
<dbReference type="PDB" id="9H3Q">
    <property type="method" value="EM"/>
    <property type="resolution" value="4.02 A"/>
    <property type="chains" value="G=2-177"/>
</dbReference>
<dbReference type="PDB" id="9H3R">
    <property type="method" value="EM"/>
    <property type="resolution" value="4.12 A"/>
    <property type="chains" value="G=2-177"/>
</dbReference>
<dbReference type="PDB" id="9H3S">
    <property type="method" value="EM"/>
    <property type="resolution" value="4.16 A"/>
    <property type="chains" value="G=2-177"/>
</dbReference>
<dbReference type="PDB" id="9H3Y">
    <property type="method" value="EM"/>
    <property type="resolution" value="3.09 A"/>
    <property type="chains" value="G=2-177"/>
</dbReference>
<dbReference type="PDB" id="9H3Z">
    <property type="method" value="EM"/>
    <property type="resolution" value="2.98 A"/>
    <property type="chains" value="G=2-177"/>
</dbReference>
<dbReference type="PDB" id="9HA6">
    <property type="method" value="EM"/>
    <property type="resolution" value="3.08 A"/>
    <property type="chains" value="G=2-177"/>
</dbReference>
<dbReference type="PDB" id="9HAM">
    <property type="method" value="EM"/>
    <property type="resolution" value="5.06 A"/>
    <property type="chains" value="G=2-177"/>
</dbReference>
<dbReference type="PDB" id="9MOR">
    <property type="method" value="EM"/>
    <property type="resolution" value="2.65 A"/>
    <property type="chains" value="F=1-177"/>
</dbReference>
<dbReference type="PDB" id="9MQ4">
    <property type="method" value="EM"/>
    <property type="resolution" value="2.78 A"/>
    <property type="chains" value="F=1-177"/>
</dbReference>
<dbReference type="PDBsum" id="1EG0"/>
<dbReference type="PDBsum" id="1ML5"/>
<dbReference type="PDBsum" id="2J28"/>
<dbReference type="PDBsum" id="2RDO"/>
<dbReference type="PDBsum" id="3BBX"/>
<dbReference type="PDBsum" id="3J5L"/>
<dbReference type="PDBsum" id="3J7Z"/>
<dbReference type="PDBsum" id="3J8G"/>
<dbReference type="PDBsum" id="3J9Y"/>
<dbReference type="PDBsum" id="3J9Z"/>
<dbReference type="PDBsum" id="3JA1"/>
<dbReference type="PDBsum" id="3JBU"/>
<dbReference type="PDBsum" id="3JBV"/>
<dbReference type="PDBsum" id="3JCD"/>
<dbReference type="PDBsum" id="3JCE"/>
<dbReference type="PDBsum" id="3JCJ"/>
<dbReference type="PDBsum" id="3JCN"/>
<dbReference type="PDBsum" id="487D"/>
<dbReference type="PDBsum" id="4CSU"/>
<dbReference type="PDBsum" id="4U1U"/>
<dbReference type="PDBsum" id="4U1V"/>
<dbReference type="PDBsum" id="4U20"/>
<dbReference type="PDBsum" id="4U24"/>
<dbReference type="PDBsum" id="4U25"/>
<dbReference type="PDBsum" id="4U26"/>
<dbReference type="PDBsum" id="4U27"/>
<dbReference type="PDBsum" id="4UY8"/>
<dbReference type="PDBsum" id="4V47"/>
<dbReference type="PDBsum" id="4V48"/>
<dbReference type="PDBsum" id="4V4H"/>
<dbReference type="PDBsum" id="4V4Q"/>
<dbReference type="PDBsum" id="4V4V"/>
<dbReference type="PDBsum" id="4V4W"/>
<dbReference type="PDBsum" id="4V50"/>
<dbReference type="PDBsum" id="4V52"/>
<dbReference type="PDBsum" id="4V53"/>
<dbReference type="PDBsum" id="4V54"/>
<dbReference type="PDBsum" id="4V55"/>
<dbReference type="PDBsum" id="4V56"/>
<dbReference type="PDBsum" id="4V57"/>
<dbReference type="PDBsum" id="4V5B"/>
<dbReference type="PDBsum" id="4V5H"/>
<dbReference type="PDBsum" id="4V5Y"/>
<dbReference type="PDBsum" id="4V64"/>
<dbReference type="PDBsum" id="4V65"/>
<dbReference type="PDBsum" id="4V66"/>
<dbReference type="PDBsum" id="4V69"/>
<dbReference type="PDBsum" id="4V6C"/>
<dbReference type="PDBsum" id="4V6D"/>
<dbReference type="PDBsum" id="4V6E"/>
<dbReference type="PDBsum" id="4V6K"/>
<dbReference type="PDBsum" id="4V6L"/>
<dbReference type="PDBsum" id="4V6M"/>
<dbReference type="PDBsum" id="4V6N"/>
<dbReference type="PDBsum" id="4V6O"/>
<dbReference type="PDBsum" id="4V6P"/>
<dbReference type="PDBsum" id="4V6Q"/>
<dbReference type="PDBsum" id="4V6R"/>
<dbReference type="PDBsum" id="4V6S"/>
<dbReference type="PDBsum" id="4V6T"/>
<dbReference type="PDBsum" id="4V6V"/>
<dbReference type="PDBsum" id="4V6Y"/>
<dbReference type="PDBsum" id="4V6Z"/>
<dbReference type="PDBsum" id="4V70"/>
<dbReference type="PDBsum" id="4V71"/>
<dbReference type="PDBsum" id="4V72"/>
<dbReference type="PDBsum" id="4V73"/>
<dbReference type="PDBsum" id="4V74"/>
<dbReference type="PDBsum" id="4V75"/>
<dbReference type="PDBsum" id="4V76"/>
<dbReference type="PDBsum" id="4V77"/>
<dbReference type="PDBsum" id="4V78"/>
<dbReference type="PDBsum" id="4V79"/>
<dbReference type="PDBsum" id="4V7A"/>
<dbReference type="PDBsum" id="4V7B"/>
<dbReference type="PDBsum" id="4V7C"/>
<dbReference type="PDBsum" id="4V7D"/>
<dbReference type="PDBsum" id="4V7I"/>
<dbReference type="PDBsum" id="4V7S"/>
<dbReference type="PDBsum" id="4V7T"/>
<dbReference type="PDBsum" id="4V7U"/>
<dbReference type="PDBsum" id="4V7V"/>
<dbReference type="PDBsum" id="4V85"/>
<dbReference type="PDBsum" id="4V89"/>
<dbReference type="PDBsum" id="4V9C"/>
<dbReference type="PDBsum" id="4V9D"/>
<dbReference type="PDBsum" id="4V9O"/>
<dbReference type="PDBsum" id="4V9P"/>
<dbReference type="PDBsum" id="4WF1"/>
<dbReference type="PDBsum" id="4WOI"/>
<dbReference type="PDBsum" id="4WWW"/>
<dbReference type="PDBsum" id="4YBB"/>
<dbReference type="PDBsum" id="5ADY"/>
<dbReference type="PDBsum" id="5AFI"/>
<dbReference type="PDBsum" id="5AKA"/>
<dbReference type="PDBsum" id="5GAD"/>
<dbReference type="PDBsum" id="5GAE"/>
<dbReference type="PDBsum" id="5GAF"/>
<dbReference type="PDBsum" id="5GAG"/>
<dbReference type="PDBsum" id="5GAH"/>
<dbReference type="PDBsum" id="5H5U"/>
<dbReference type="PDBsum" id="5IQR"/>
<dbReference type="PDBsum" id="5IT8"/>
<dbReference type="PDBsum" id="5J5B"/>
<dbReference type="PDBsum" id="5J7L"/>
<dbReference type="PDBsum" id="5J88"/>
<dbReference type="PDBsum" id="5J8A"/>
<dbReference type="PDBsum" id="5J91"/>
<dbReference type="PDBsum" id="5JC9"/>
<dbReference type="PDBsum" id="5JTE"/>
<dbReference type="PDBsum" id="5JU8"/>
<dbReference type="PDBsum" id="5KCR"/>
<dbReference type="PDBsum" id="5KCS"/>
<dbReference type="PDBsum" id="5KPS"/>
<dbReference type="PDBsum" id="5KPV"/>
<dbReference type="PDBsum" id="5KPW"/>
<dbReference type="PDBsum" id="5KPX"/>
<dbReference type="PDBsum" id="5L3P"/>
<dbReference type="PDBsum" id="5LZA"/>
<dbReference type="PDBsum" id="5LZB"/>
<dbReference type="PDBsum" id="5LZC"/>
<dbReference type="PDBsum" id="5LZD"/>
<dbReference type="PDBsum" id="5LZE"/>
<dbReference type="PDBsum" id="5LZF"/>
<dbReference type="PDBsum" id="5MDV"/>
<dbReference type="PDBsum" id="5MDW"/>
<dbReference type="PDBsum" id="5MDY"/>
<dbReference type="PDBsum" id="5MDZ"/>
<dbReference type="PDBsum" id="5MGP"/>
<dbReference type="PDBsum" id="5NCO"/>
<dbReference type="PDBsum" id="5NP6"/>
<dbReference type="PDBsum" id="5NWY"/>
<dbReference type="PDBsum" id="5O2R"/>
<dbReference type="PDBsum" id="5U4I"/>
<dbReference type="PDBsum" id="5U9F"/>
<dbReference type="PDBsum" id="5U9G"/>
<dbReference type="PDBsum" id="5UYK"/>
<dbReference type="PDBsum" id="5UYL"/>
<dbReference type="PDBsum" id="5UYM"/>
<dbReference type="PDBsum" id="5UYN"/>
<dbReference type="PDBsum" id="5UYP"/>
<dbReference type="PDBsum" id="5UYQ"/>
<dbReference type="PDBsum" id="5WDT"/>
<dbReference type="PDBsum" id="5WE4"/>
<dbReference type="PDBsum" id="5WE6"/>
<dbReference type="PDBsum" id="5WF0"/>
<dbReference type="PDBsum" id="5WFK"/>
<dbReference type="PDBsum" id="5WFS"/>
<dbReference type="PDBsum" id="6BU8"/>
<dbReference type="PDBsum" id="6BY1"/>
<dbReference type="PDBsum" id="6C4I"/>
<dbReference type="PDBsum" id="6DNC"/>
<dbReference type="PDBsum" id="6ENF"/>
<dbReference type="PDBsum" id="6ENJ"/>
<dbReference type="PDBsum" id="6ENU"/>
<dbReference type="PDBsum" id="6GBZ"/>
<dbReference type="PDBsum" id="6GC0"/>
<dbReference type="PDBsum" id="6GC4"/>
<dbReference type="PDBsum" id="6GC6"/>
<dbReference type="PDBsum" id="6GC8"/>
<dbReference type="PDBsum" id="6GWT"/>
<dbReference type="PDBsum" id="6GXM"/>
<dbReference type="PDBsum" id="6GXN"/>
<dbReference type="PDBsum" id="6GXO"/>
<dbReference type="PDBsum" id="6GXP"/>
<dbReference type="PDBsum" id="6H4N"/>
<dbReference type="PDBsum" id="6H58"/>
<dbReference type="PDBsum" id="6HRM"/>
<dbReference type="PDBsum" id="6I0Y"/>
<dbReference type="PDBsum" id="6I7V"/>
<dbReference type="PDBsum" id="6O9J"/>
<dbReference type="PDBsum" id="6O9K"/>
<dbReference type="PDBsum" id="6OFX"/>
<dbReference type="PDBsum" id="6OG7"/>
<dbReference type="PDBsum" id="6OGF"/>
<dbReference type="PDBsum" id="6OGG"/>
<dbReference type="PDBsum" id="6OGI"/>
<dbReference type="PDBsum" id="6OM6"/>
<dbReference type="PDBsum" id="6ORE"/>
<dbReference type="PDBsum" id="6ORL"/>
<dbReference type="PDBsum" id="6OSK"/>
<dbReference type="PDBsum" id="6OSQ"/>
<dbReference type="PDBsum" id="6OST"/>
<dbReference type="PDBsum" id="6OT3"/>
<dbReference type="PDBsum" id="6OUO"/>
<dbReference type="PDBsum" id="6PJ6"/>
<dbReference type="PDBsum" id="6Q97"/>
<dbReference type="PDBsum" id="6Q98"/>
<dbReference type="PDBsum" id="6Q9A"/>
<dbReference type="PDBsum" id="6QDW"/>
<dbReference type="PDBsum" id="6QUL"/>
<dbReference type="PDBsum" id="6S0K"/>
<dbReference type="PDBsum" id="6SZS"/>
<dbReference type="PDBsum" id="6TBV"/>
<dbReference type="PDBsum" id="6TC3"/>
<dbReference type="PDBsum" id="6U48"/>
<dbReference type="PDBsum" id="6VU3"/>
<dbReference type="PDBsum" id="6VWL"/>
<dbReference type="PDBsum" id="6VWM"/>
<dbReference type="PDBsum" id="6VWN"/>
<dbReference type="PDBsum" id="6VYQ"/>
<dbReference type="PDBsum" id="6VYR"/>
<dbReference type="PDBsum" id="6VYS"/>
<dbReference type="PDBsum" id="6VYT"/>
<dbReference type="PDBsum" id="6VYU"/>
<dbReference type="PDBsum" id="6VYW"/>
<dbReference type="PDBsum" id="6VYX"/>
<dbReference type="PDBsum" id="6VYY"/>
<dbReference type="PDBsum" id="6VYZ"/>
<dbReference type="PDBsum" id="6VZ2"/>
<dbReference type="PDBsum" id="6VZ3"/>
<dbReference type="PDBsum" id="6VZ5"/>
<dbReference type="PDBsum" id="6VZ7"/>
<dbReference type="PDBsum" id="6VZJ"/>
<dbReference type="PDBsum" id="6WD0"/>
<dbReference type="PDBsum" id="6WD1"/>
<dbReference type="PDBsum" id="6WD2"/>
<dbReference type="PDBsum" id="6WD3"/>
<dbReference type="PDBsum" id="6WD4"/>
<dbReference type="PDBsum" id="6WD5"/>
<dbReference type="PDBsum" id="6WD6"/>
<dbReference type="PDBsum" id="6WD7"/>
<dbReference type="PDBsum" id="6WD8"/>
<dbReference type="PDBsum" id="6WD9"/>
<dbReference type="PDBsum" id="6WDA"/>
<dbReference type="PDBsum" id="6WDB"/>
<dbReference type="PDBsum" id="6WDC"/>
<dbReference type="PDBsum" id="6WDD"/>
<dbReference type="PDBsum" id="6WDE"/>
<dbReference type="PDBsum" id="6WDF"/>
<dbReference type="PDBsum" id="6WDG"/>
<dbReference type="PDBsum" id="6WDH"/>
<dbReference type="PDBsum" id="6WDI"/>
<dbReference type="PDBsum" id="6WDJ"/>
<dbReference type="PDBsum" id="6WDK"/>
<dbReference type="PDBsum" id="6WDL"/>
<dbReference type="PDBsum" id="6WDM"/>
<dbReference type="PDBsum" id="6WNT"/>
<dbReference type="PDBsum" id="6WNV"/>
<dbReference type="PDBsum" id="6WNW"/>
<dbReference type="PDBsum" id="6X6T"/>
<dbReference type="PDBsum" id="6X7F"/>
<dbReference type="PDBsum" id="6X7K"/>
<dbReference type="PDBsum" id="6X9Q"/>
<dbReference type="PDBsum" id="6XDQ"/>
<dbReference type="PDBsum" id="6XDR"/>
<dbReference type="PDBsum" id="6XGF"/>
<dbReference type="PDBsum" id="6XII"/>
<dbReference type="PDBsum" id="6XIJ"/>
<dbReference type="PDBsum" id="6XZ7"/>
<dbReference type="PDBsum" id="6XZA"/>
<dbReference type="PDBsum" id="6XZB"/>
<dbReference type="PDBsum" id="6Y69"/>
<dbReference type="PDBsum" id="6YS3"/>
<dbReference type="PDBsum" id="6YSR"/>
<dbReference type="PDBsum" id="6YSS"/>
<dbReference type="PDBsum" id="6YST"/>
<dbReference type="PDBsum" id="6YSU"/>
<dbReference type="PDBsum" id="6ZTJ"/>
<dbReference type="PDBsum" id="6ZTL"/>
<dbReference type="PDBsum" id="6ZTM"/>
<dbReference type="PDBsum" id="6ZTN"/>
<dbReference type="PDBsum" id="6ZTO"/>
<dbReference type="PDBsum" id="6ZTP"/>
<dbReference type="PDBsum" id="6ZU1"/>
<dbReference type="PDBsum" id="7ABZ"/>
<dbReference type="PDBsum" id="7AC7"/>
<dbReference type="PDBsum" id="7ACJ"/>
<dbReference type="PDBsum" id="7ACR"/>
<dbReference type="PDBsum" id="7B5K"/>
<dbReference type="PDBsum" id="7BL2"/>
<dbReference type="PDBsum" id="7BL3"/>
<dbReference type="PDBsum" id="7BL4"/>
<dbReference type="PDBsum" id="7BL5"/>
<dbReference type="PDBsum" id="7BL6"/>
<dbReference type="PDBsum" id="7BV8"/>
<dbReference type="PDBsum" id="7D6Z"/>
<dbReference type="PDBsum" id="7D80"/>
<dbReference type="PDBsum" id="7JSS"/>
<dbReference type="PDBsum" id="7JSW"/>
<dbReference type="PDBsum" id="7JSZ"/>
<dbReference type="PDBsum" id="7JT1"/>
<dbReference type="PDBsum" id="7JT2"/>
<dbReference type="PDBsum" id="7JT3"/>
<dbReference type="PDBsum" id="7K00"/>
<dbReference type="PDBsum" id="7K50"/>
<dbReference type="PDBsum" id="7K51"/>
<dbReference type="PDBsum" id="7K52"/>
<dbReference type="PDBsum" id="7K53"/>
<dbReference type="PDBsum" id="7K54"/>
<dbReference type="PDBsum" id="7K55"/>
<dbReference type="PDBsum" id="7LV0"/>
<dbReference type="PDBsum" id="7LVK"/>
<dbReference type="PDBsum" id="7M5D"/>
<dbReference type="PDBsum" id="7N1P"/>
<dbReference type="PDBsum" id="7N2C"/>
<dbReference type="PDBsum" id="7N2U"/>
<dbReference type="PDBsum" id="7N2V"/>
<dbReference type="PDBsum" id="7N30"/>
<dbReference type="PDBsum" id="7N31"/>
<dbReference type="PDBsum" id="7NBU"/>
<dbReference type="PDBsum" id="7NWT"/>
<dbReference type="PDBsum" id="7O19"/>
<dbReference type="PDBsum" id="7O1A"/>
<dbReference type="PDBsum" id="7O1C"/>
<dbReference type="PDBsum" id="7OIZ"/>
<dbReference type="PDBsum" id="7OJ0"/>
<dbReference type="PDBsum" id="7P3K"/>
<dbReference type="PDBsum" id="7PJS"/>
<dbReference type="PDBsum" id="7PJT"/>
<dbReference type="PDBsum" id="7PJU"/>
<dbReference type="PDBsum" id="7PJV"/>
<dbReference type="PDBsum" id="7PJW"/>
<dbReference type="PDBsum" id="7PJX"/>
<dbReference type="PDBsum" id="7PJY"/>
<dbReference type="PDBsum" id="7PJZ"/>
<dbReference type="PDBsum" id="7Q4K"/>
<dbReference type="PDBsum" id="7QG8"/>
<dbReference type="PDBsum" id="7QGH"/>
<dbReference type="PDBsum" id="7QGN"/>
<dbReference type="PDBsum" id="7QGR"/>
<dbReference type="PDBsum" id="7QQ3"/>
<dbReference type="PDBsum" id="7S1G"/>
<dbReference type="PDBsum" id="7S1H"/>
<dbReference type="PDBsum" id="7S1I"/>
<dbReference type="PDBsum" id="7S1J"/>
<dbReference type="PDBsum" id="7S1K"/>
<dbReference type="PDBsum" id="7SA4"/>
<dbReference type="PDBsum" id="7SS9"/>
<dbReference type="PDBsum" id="7SSD"/>
<dbReference type="PDBsum" id="7SSL"/>
<dbReference type="PDBsum" id="7SSN"/>
<dbReference type="PDBsum" id="7SSO"/>
<dbReference type="PDBsum" id="7SSW"/>
<dbReference type="PDBsum" id="7ST2"/>
<dbReference type="PDBsum" id="7ST6"/>
<dbReference type="PDBsum" id="7ST7"/>
<dbReference type="PDBsum" id="7TOS"/>
<dbReference type="PDBsum" id="7UG7"/>
<dbReference type="PDBsum" id="7UPH"/>
<dbReference type="PDBsum" id="7Y7C"/>
<dbReference type="PDBsum" id="7Y7D"/>
<dbReference type="PDBsum" id="7Y7E"/>
<dbReference type="PDBsum" id="7Y7F"/>
<dbReference type="PDBsum" id="7Y7G"/>
<dbReference type="PDBsum" id="7Y7H"/>
<dbReference type="PDBsum" id="7Z20"/>
<dbReference type="PDBsum" id="7ZOD"/>
<dbReference type="PDBsum" id="7ZP8"/>
<dbReference type="PDBsum" id="7ZQ5"/>
<dbReference type="PDBsum" id="7ZQ6"/>
<dbReference type="PDBsum" id="7ZTA"/>
<dbReference type="PDBsum" id="8A3L"/>
<dbReference type="PDBsum" id="8AKN"/>
<dbReference type="PDBsum" id="8AM9"/>
<dbReference type="PDBsum" id="8ANA"/>
<dbReference type="PDBsum" id="8AP4"/>
<dbReference type="PDBsum" id="8AYE"/>
<dbReference type="PDBsum" id="8B0X"/>
<dbReference type="PDBsum" id="8B7Y"/>
<dbReference type="PDBsum" id="8BF7"/>
<dbReference type="PDBsum" id="8BGE"/>
<dbReference type="PDBsum" id="8BGH"/>
<dbReference type="PDBsum" id="8BH4"/>
<dbReference type="PDBsum" id="8BHJ"/>
<dbReference type="PDBsum" id="8BHL"/>
<dbReference type="PDBsum" id="8BHN"/>
<dbReference type="PDBsum" id="8BHP"/>
<dbReference type="PDBsum" id="8BIL"/>
<dbReference type="PDBsum" id="8BIM"/>
<dbReference type="PDBsum" id="8CAM"/>
<dbReference type="PDBsum" id="8CEU"/>
<dbReference type="PDBsum" id="8CGD"/>
<dbReference type="PDBsum" id="8CGK"/>
<dbReference type="PDBsum" id="8CGV"/>
<dbReference type="PDBsum" id="8EIU"/>
<dbReference type="PDBsum" id="8EKC"/>
<dbReference type="PDBsum" id="8EMM"/>
<dbReference type="PDBsum" id="8FIZ"/>
<dbReference type="PDBsum" id="8FTO"/>
<dbReference type="PDBsum" id="8FZD"/>
<dbReference type="PDBsum" id="8FZE"/>
<dbReference type="PDBsum" id="8FZF"/>
<dbReference type="PDBsum" id="8FZG"/>
<dbReference type="PDBsum" id="8FZH"/>
<dbReference type="PDBsum" id="8FZI"/>
<dbReference type="PDBsum" id="8FZJ"/>
<dbReference type="PDBsum" id="8G2U"/>
<dbReference type="PDBsum" id="8G31"/>
<dbReference type="PDBsum" id="8G34"/>
<dbReference type="PDBsum" id="8G38"/>
<dbReference type="PDBsum" id="8G6W"/>
<dbReference type="PDBsum" id="8G6X"/>
<dbReference type="PDBsum" id="8G6Y"/>
<dbReference type="PDBsum" id="8G7P"/>
<dbReference type="PDBsum" id="8G7Q"/>
<dbReference type="PDBsum" id="8G7R"/>
<dbReference type="PDBsum" id="8G7S"/>
<dbReference type="PDBsum" id="8HSP"/>
<dbReference type="PDBsum" id="8HTZ"/>
<dbReference type="PDBsum" id="8HU1"/>
<dbReference type="PDBsum" id="8IFB"/>
<dbReference type="PDBsum" id="8IFC"/>
<dbReference type="PDBsum" id="8P16"/>
<dbReference type="PDBsum" id="8P17"/>
<dbReference type="PDBsum" id="8P18"/>
<dbReference type="PDBsum" id="8PEG"/>
<dbReference type="PDBsum" id="8PHJ"/>
<dbReference type="PDBsum" id="8PKL"/>
<dbReference type="PDBsum" id="8PVA"/>
<dbReference type="PDBsum" id="8Q4F"/>
<dbReference type="PDBsum" id="8QBT"/>
<dbReference type="PDBsum" id="8QK7"/>
<dbReference type="PDBsum" id="8QOA"/>
<dbReference type="PDBsum" id="8R6C"/>
<dbReference type="PDBsum" id="8R8M"/>
<dbReference type="PDBsum" id="8RPY"/>
<dbReference type="PDBsum" id="8RPZ"/>
<dbReference type="PDBsum" id="8RQ0"/>
<dbReference type="PDBsum" id="8RQ2"/>
<dbReference type="PDBsum" id="8SYL"/>
<dbReference type="PDBsum" id="8T5D"/>
<dbReference type="PDBsum" id="8T5H"/>
<dbReference type="PDBsum" id="8VS9"/>
<dbReference type="PDBsum" id="8VSA"/>
<dbReference type="PDBsum" id="8W51"/>
<dbReference type="PDBsum" id="8YUO"/>
<dbReference type="PDBsum" id="8YUP"/>
<dbReference type="PDBsum" id="8YUQ"/>
<dbReference type="PDBsum" id="8YUR"/>
<dbReference type="PDBsum" id="8YUS"/>
<dbReference type="PDBsum" id="9D89"/>
<dbReference type="PDBsum" id="9FBV"/>
<dbReference type="PDBsum" id="9GFT"/>
<dbReference type="PDBsum" id="9GGR"/>
<dbReference type="PDBsum" id="9H3L"/>
<dbReference type="PDBsum" id="9H3O"/>
<dbReference type="PDBsum" id="9H3P"/>
<dbReference type="PDBsum" id="9H3Q"/>
<dbReference type="PDBsum" id="9H3R"/>
<dbReference type="PDBsum" id="9H3S"/>
<dbReference type="PDBsum" id="9H3Y"/>
<dbReference type="PDBsum" id="9H3Z"/>
<dbReference type="PDBsum" id="9HA6"/>
<dbReference type="PDBsum" id="9HAM"/>
<dbReference type="PDBsum" id="9MOR"/>
<dbReference type="PDBsum" id="9MQ4"/>
<dbReference type="EMDB" id="EMD-0076"/>
<dbReference type="EMDB" id="EMD-0080"/>
<dbReference type="EMDB" id="EMD-0081"/>
<dbReference type="EMDB" id="EMD-0082"/>
<dbReference type="EMDB" id="EMD-0083"/>
<dbReference type="EMDB" id="EMD-0137"/>
<dbReference type="EMDB" id="EMD-0139"/>
<dbReference type="EMDB" id="EMD-0261"/>
<dbReference type="EMDB" id="EMD-0322"/>
<dbReference type="EMDB" id="EMD-10073"/>
<dbReference type="EMDB" id="EMD-10353"/>
<dbReference type="EMDB" id="EMD-10453"/>
<dbReference type="EMDB" id="EMD-10458"/>
<dbReference type="EMDB" id="EMD-10655"/>
<dbReference type="EMDB" id="EMD-10656"/>
<dbReference type="EMDB" id="EMD-10657"/>
<dbReference type="EMDB" id="EMD-10705"/>
<dbReference type="EMDB" id="EMD-10905"/>
<dbReference type="EMDB" id="EMD-10906"/>
<dbReference type="EMDB" id="EMD-10907"/>
<dbReference type="EMDB" id="EMD-10908"/>
<dbReference type="EMDB" id="EMD-11418"/>
<dbReference type="EMDB" id="EMD-11419"/>
<dbReference type="EMDB" id="EMD-11420"/>
<dbReference type="EMDB" id="EMD-11421"/>
<dbReference type="EMDB" id="EMD-11422"/>
<dbReference type="EMDB" id="EMD-11423"/>
<dbReference type="EMDB" id="EMD-11426"/>
<dbReference type="EMDB" id="EMD-11710"/>
<dbReference type="EMDB" id="EMD-11713"/>
<dbReference type="EMDB" id="EMD-11717"/>
<dbReference type="EMDB" id="EMD-11718"/>
<dbReference type="EMDB" id="EMD-12035"/>
<dbReference type="EMDB" id="EMD-12215"/>
<dbReference type="EMDB" id="EMD-12216"/>
<dbReference type="EMDB" id="EMD-12217"/>
<dbReference type="EMDB" id="EMD-12218"/>
<dbReference type="EMDB" id="EMD-12219"/>
<dbReference type="EMDB" id="EMD-12261"/>
<dbReference type="EMDB" id="EMD-12635"/>
<dbReference type="EMDB" id="EMD-12693"/>
<dbReference type="EMDB" id="EMD-12694"/>
<dbReference type="EMDB" id="EMD-12695"/>
<dbReference type="EMDB" id="EMD-12936"/>
<dbReference type="EMDB" id="EMD-12937"/>
<dbReference type="EMDB" id="EMD-13180"/>
<dbReference type="EMDB" id="EMD-13458"/>
<dbReference type="EMDB" id="EMD-13459"/>
<dbReference type="EMDB" id="EMD-13461"/>
<dbReference type="EMDB" id="EMD-13462"/>
<dbReference type="EMDB" id="EMD-13463"/>
<dbReference type="EMDB" id="EMD-13464"/>
<dbReference type="EMDB" id="EMD-13465"/>
<dbReference type="EMDB" id="EMD-13805"/>
<dbReference type="EMDB" id="EMD-13952"/>
<dbReference type="EMDB" id="EMD-13955"/>
<dbReference type="EMDB" id="EMD-13956"/>
<dbReference type="EMDB" id="EMD-13958"/>
<dbReference type="EMDB" id="EMD-14121"/>
<dbReference type="EMDB" id="EMD-14454"/>
<dbReference type="EMDB" id="EMD-14846"/>
<dbReference type="EMDB" id="EMD-14850"/>
<dbReference type="EMDB" id="EMD-14864"/>
<dbReference type="EMDB" id="EMD-14865"/>
<dbReference type="EMDB" id="EMD-14956"/>
<dbReference type="EMDB" id="EMD-15116"/>
<dbReference type="EMDB" id="EMD-15558"/>
<dbReference type="EMDB" id="EMD-15712"/>
<dbReference type="EMDB" id="EMD-15793"/>
<dbReference type="EMDB" id="EMD-15905"/>
<dbReference type="EMDB" id="EMD-16015"/>
<dbReference type="EMDB" id="EMD-16029"/>
<dbReference type="EMDB" id="EMD-16031"/>
<dbReference type="EMDB" id="EMD-16047"/>
<dbReference type="EMDB" id="EMD-16057"/>
<dbReference type="EMDB" id="EMD-16059"/>
<dbReference type="EMDB" id="EMD-16062"/>
<dbReference type="EMDB" id="EMD-16065"/>
<dbReference type="EMDB" id="EMD-16081"/>
<dbReference type="EMDB" id="EMD-16082"/>
<dbReference type="EMDB" id="EMD-16530"/>
<dbReference type="EMDB" id="EMD-16613"/>
<dbReference type="EMDB" id="EMD-16641"/>
<dbReference type="EMDB" id="EMD-16646"/>
<dbReference type="EMDB" id="EMD-16652"/>
<dbReference type="EMDB" id="EMD-17346"/>
<dbReference type="EMDB" id="EMD-17347"/>
<dbReference type="EMDB" id="EMD-17348"/>
<dbReference type="EMDB" id="EMD-17631"/>
<dbReference type="EMDB" id="EMD-17667"/>
<dbReference type="EMDB" id="EMD-17743"/>
<dbReference type="EMDB" id="EMD-17959"/>
<dbReference type="EMDB" id="EMD-18145"/>
<dbReference type="EMDB" id="EMD-18320"/>
<dbReference type="EMDB" id="EMD-18458"/>
<dbReference type="EMDB" id="EMD-18534"/>
<dbReference type="EMDB" id="EMD-18950"/>
<dbReference type="EMDB" id="EMD-19004"/>
<dbReference type="EMDB" id="EMD-19426"/>
<dbReference type="EMDB" id="EMD-19427"/>
<dbReference type="EMDB" id="EMD-19428"/>
<dbReference type="EMDB" id="EMD-19429"/>
<dbReference type="EMDB" id="EMD-20048"/>
<dbReference type="EMDB" id="EMD-20052"/>
<dbReference type="EMDB" id="EMD-21420"/>
<dbReference type="EMDB" id="EMD-21421"/>
<dbReference type="EMDB" id="EMD-21422"/>
<dbReference type="EMDB" id="EMD-21620"/>
<dbReference type="EMDB" id="EMD-21625"/>
<dbReference type="EMDB" id="EMD-21630"/>
<dbReference type="EMDB" id="EMD-21631"/>
<dbReference type="EMDB" id="EMD-21632"/>
<dbReference type="EMDB" id="EMD-21633"/>
<dbReference type="EMDB" id="EMD-21634"/>
<dbReference type="EMDB" id="EMD-21635"/>
<dbReference type="EMDB" id="EMD-21636"/>
<dbReference type="EMDB" id="EMD-21637"/>
<dbReference type="EMDB" id="EMD-21638"/>
<dbReference type="EMDB" id="EMD-21639"/>
<dbReference type="EMDB" id="EMD-21640"/>
<dbReference type="EMDB" id="EMD-21641"/>
<dbReference type="EMDB" id="EMD-21856"/>
<dbReference type="EMDB" id="EMD-21857"/>
<dbReference type="EMDB" id="EMD-21858"/>
<dbReference type="EMDB" id="EMD-22459"/>
<dbReference type="EMDB" id="EMD-22461"/>
<dbReference type="EMDB" id="EMD-22464"/>
<dbReference type="EMDB" id="EMD-22466"/>
<dbReference type="EMDB" id="EMD-22469"/>
<dbReference type="EMDB" id="EMD-22472"/>
<dbReference type="EMDB" id="EMD-22669"/>
<dbReference type="EMDB" id="EMD-22670"/>
<dbReference type="EMDB" id="EMD-22671"/>
<dbReference type="EMDB" id="EMD-22672"/>
<dbReference type="EMDB" id="EMD-22673"/>
<dbReference type="EMDB" id="EMD-22674"/>
<dbReference type="EMDB" id="EMD-23528"/>
<dbReference type="EMDB" id="EMD-24120"/>
<dbReference type="EMDB" id="EMD-24132"/>
<dbReference type="EMDB" id="EMD-24133"/>
<dbReference type="EMDB" id="EMD-24134"/>
<dbReference type="EMDB" id="EMD-24135"/>
<dbReference type="EMDB" id="EMD-24136"/>
<dbReference type="EMDB" id="EMD-24803"/>
<dbReference type="EMDB" id="EMD-25405"/>
<dbReference type="EMDB" id="EMD-25407"/>
<dbReference type="EMDB" id="EMD-25409"/>
<dbReference type="EMDB" id="EMD-25410"/>
<dbReference type="EMDB" id="EMD-25411"/>
<dbReference type="EMDB" id="EMD-25415"/>
<dbReference type="EMDB" id="EMD-25418"/>
<dbReference type="EMDB" id="EMD-25420"/>
<dbReference type="EMDB" id="EMD-25421"/>
<dbReference type="EMDB" id="EMD-30215"/>
<dbReference type="EMDB" id="EMD-30598"/>
<dbReference type="EMDB" id="EMD-30611"/>
<dbReference type="EMDB" id="EMD-33660"/>
<dbReference type="EMDB" id="EMD-33661"/>
<dbReference type="EMDB" id="EMD-33662"/>
<dbReference type="EMDB" id="EMD-33663"/>
<dbReference type="EMDB" id="EMD-33664"/>
<dbReference type="EMDB" id="EMD-33665"/>
<dbReference type="EMDB" id="EMD-3489"/>
<dbReference type="EMDB" id="EMD-3490"/>
<dbReference type="EMDB" id="EMD-3492"/>
<dbReference type="EMDB" id="EMD-3493"/>
<dbReference type="EMDB" id="EMD-35001"/>
<dbReference type="EMDB" id="EMD-35020"/>
<dbReference type="EMDB" id="EMD-35022"/>
<dbReference type="EMDB" id="EMD-3508"/>
<dbReference type="EMDB" id="EMD-35411"/>
<dbReference type="EMDB" id="EMD-35412"/>
<dbReference type="EMDB" id="EMD-3617"/>
<dbReference type="EMDB" id="EMD-3713"/>
<dbReference type="EMDB" id="EMD-37271"/>
<dbReference type="EMDB" id="EMD-3730"/>
<dbReference type="EMDB" id="EMD-3898"/>
<dbReference type="EMDB" id="EMD-3899"/>
<dbReference type="EMDB" id="EMD-3903"/>
<dbReference type="EMDB" id="EMD-39577"/>
<dbReference type="EMDB" id="EMD-39578"/>
<dbReference type="EMDB" id="EMD-39579"/>
<dbReference type="EMDB" id="EMD-39580"/>
<dbReference type="EMDB" id="EMD-39581"/>
<dbReference type="EMDB" id="EMD-4001"/>
<dbReference type="EMDB" id="EMD-4121"/>
<dbReference type="EMDB" id="EMD-4122"/>
<dbReference type="EMDB" id="EMD-4123"/>
<dbReference type="EMDB" id="EMD-4124"/>
<dbReference type="EMDB" id="EMD-4125"/>
<dbReference type="EMDB" id="EMD-4126"/>
<dbReference type="EMDB" id="EMD-4378"/>
<dbReference type="EMDB" id="EMD-4379"/>
<dbReference type="EMDB" id="EMD-4380"/>
<dbReference type="EMDB" id="EMD-4381"/>
<dbReference type="EMDB" id="EMD-4383"/>
<dbReference type="EMDB" id="EMD-4476"/>
<dbReference type="EMDB" id="EMD-4477"/>
<dbReference type="EMDB" id="EMD-4478"/>
<dbReference type="EMDB" id="EMD-4638"/>
<dbReference type="EMDB" id="EMD-48479"/>
<dbReference type="EMDB" id="EMD-48513"/>
<dbReference type="EMDB" id="EMD-50296"/>
<dbReference type="EMDB" id="EMD-51318"/>
<dbReference type="EMDB" id="EMD-51340"/>
<dbReference type="EMDB" id="EMD-51829"/>
<dbReference type="EMDB" id="EMD-51832"/>
<dbReference type="EMDB" id="EMD-51833"/>
<dbReference type="EMDB" id="EMD-51834"/>
<dbReference type="EMDB" id="EMD-51835"/>
<dbReference type="EMDB" id="EMD-51836"/>
<dbReference type="EMDB" id="EMD-51842"/>
<dbReference type="EMDB" id="EMD-51843"/>
<dbReference type="EMDB" id="EMD-51978"/>
<dbReference type="EMDB" id="EMD-51983"/>
<dbReference type="EMDB" id="EMD-6667"/>
<dbReference type="EMDB" id="EMD-7289"/>
<dbReference type="EMDB" id="EMD-7341"/>
<dbReference type="EMDB" id="EMD-8000"/>
<dbReference type="EMDB" id="EMD-8001"/>
<dbReference type="EMDB" id="EMD-8002"/>
<dbReference type="EMDB" id="EMD-8003"/>
<dbReference type="EMDB" id="EMD-8004"/>
<dbReference type="EMDB" id="EMD-8107"/>
<dbReference type="EMDB" id="EMD-8175"/>
<dbReference type="EMDB" id="EMD-8176"/>
<dbReference type="EMDB" id="EMD-8237"/>
<dbReference type="EMDB" id="EMD-8238"/>
<dbReference type="EMDB" id="EMD-8279"/>
<dbReference type="EMDB" id="EMD-8280"/>
<dbReference type="EMDB" id="EMD-8281"/>
<dbReference type="EMDB" id="EMD-8282"/>
<dbReference type="EMDB" id="EMD-8505"/>
<dbReference type="EMDB" id="EMD-8615"/>
<dbReference type="EMDB" id="EMD-8616"/>
<dbReference type="EMDB" id="EMD-8617"/>
<dbReference type="EMDB" id="EMD-8618"/>
<dbReference type="EMDB" id="EMD-8619"/>
<dbReference type="EMDB" id="EMD-8620"/>
<dbReference type="EMDB" id="EMD-8813"/>
<dbReference type="EMDB" id="EMD-8814"/>
<dbReference type="EMDB" id="EMD-8815"/>
<dbReference type="EMDB" id="EMD-8828"/>
<dbReference type="SMR" id="P0AG55"/>
<dbReference type="BioGRID" id="4263428">
    <property type="interactions" value="78"/>
</dbReference>
<dbReference type="BioGRID" id="852115">
    <property type="interactions" value="2"/>
</dbReference>
<dbReference type="ComplexPortal" id="CPX-3807">
    <property type="entry name" value="50S large ribosomal subunit"/>
</dbReference>
<dbReference type="DIP" id="DIP-35860N"/>
<dbReference type="FunCoup" id="P0AG55">
    <property type="interactions" value="1152"/>
</dbReference>
<dbReference type="IntAct" id="P0AG55">
    <property type="interactions" value="96"/>
</dbReference>
<dbReference type="STRING" id="511145.b3305"/>
<dbReference type="iPTMnet" id="P0AG55"/>
<dbReference type="jPOST" id="P0AG55"/>
<dbReference type="PaxDb" id="511145-b3305"/>
<dbReference type="EnsemblBacteria" id="AAC76330">
    <property type="protein sequence ID" value="AAC76330"/>
    <property type="gene ID" value="b3305"/>
</dbReference>
<dbReference type="GeneID" id="86948169"/>
<dbReference type="GeneID" id="947803"/>
<dbReference type="KEGG" id="ecj:JW3267"/>
<dbReference type="KEGG" id="eco:b3305"/>
<dbReference type="KEGG" id="ecoc:C3026_17965"/>
<dbReference type="PATRIC" id="fig|1411691.4.peg.3426"/>
<dbReference type="EchoBASE" id="EB0862"/>
<dbReference type="eggNOG" id="COG0097">
    <property type="taxonomic scope" value="Bacteria"/>
</dbReference>
<dbReference type="HOGENOM" id="CLU_065464_1_2_6"/>
<dbReference type="InParanoid" id="P0AG55"/>
<dbReference type="OMA" id="RERHGLC"/>
<dbReference type="OrthoDB" id="9805007at2"/>
<dbReference type="PhylomeDB" id="P0AG55"/>
<dbReference type="BioCyc" id="EcoCyc:EG10869-MONOMER"/>
<dbReference type="BioCyc" id="MetaCyc:EG10869-MONOMER"/>
<dbReference type="EvolutionaryTrace" id="P0AG55"/>
<dbReference type="PRO" id="PR:P0AG55"/>
<dbReference type="Proteomes" id="UP000000625">
    <property type="component" value="Chromosome"/>
</dbReference>
<dbReference type="GO" id="GO:0005737">
    <property type="term" value="C:cytoplasm"/>
    <property type="evidence" value="ECO:0000314"/>
    <property type="project" value="ComplexPortal"/>
</dbReference>
<dbReference type="GO" id="GO:0005829">
    <property type="term" value="C:cytosol"/>
    <property type="evidence" value="ECO:0000314"/>
    <property type="project" value="EcoCyc"/>
</dbReference>
<dbReference type="GO" id="GO:0022625">
    <property type="term" value="C:cytosolic large ribosomal subunit"/>
    <property type="evidence" value="ECO:0000314"/>
    <property type="project" value="CAFA"/>
</dbReference>
<dbReference type="GO" id="GO:0070180">
    <property type="term" value="F:large ribosomal subunit rRNA binding"/>
    <property type="evidence" value="ECO:0000314"/>
    <property type="project" value="EcoCyc"/>
</dbReference>
<dbReference type="GO" id="GO:0003735">
    <property type="term" value="F:structural constituent of ribosome"/>
    <property type="evidence" value="ECO:0000314"/>
    <property type="project" value="CAFA"/>
</dbReference>
<dbReference type="GO" id="GO:0002181">
    <property type="term" value="P:cytoplasmic translation"/>
    <property type="evidence" value="ECO:0000318"/>
    <property type="project" value="GO_Central"/>
</dbReference>
<dbReference type="GO" id="GO:0046677">
    <property type="term" value="P:response to antibiotic"/>
    <property type="evidence" value="ECO:0007669"/>
    <property type="project" value="UniProtKB-KW"/>
</dbReference>
<dbReference type="GO" id="GO:0000027">
    <property type="term" value="P:ribosomal large subunit assembly"/>
    <property type="evidence" value="ECO:0000314"/>
    <property type="project" value="CAFA"/>
</dbReference>
<dbReference type="FunFam" id="3.90.930.12:FF:000001">
    <property type="entry name" value="50S ribosomal protein L6"/>
    <property type="match status" value="1"/>
</dbReference>
<dbReference type="FunFam" id="3.90.930.12:FF:000002">
    <property type="entry name" value="50S ribosomal protein L6"/>
    <property type="match status" value="1"/>
</dbReference>
<dbReference type="Gene3D" id="3.90.930.12">
    <property type="entry name" value="Ribosomal protein L6, alpha-beta domain"/>
    <property type="match status" value="2"/>
</dbReference>
<dbReference type="HAMAP" id="MF_01365_B">
    <property type="entry name" value="Ribosomal_uL6_B"/>
    <property type="match status" value="1"/>
</dbReference>
<dbReference type="InterPro" id="IPR000702">
    <property type="entry name" value="Ribosomal_uL6-like"/>
</dbReference>
<dbReference type="InterPro" id="IPR036789">
    <property type="entry name" value="Ribosomal_uL6-like_a/b-dom_sf"/>
</dbReference>
<dbReference type="InterPro" id="IPR020040">
    <property type="entry name" value="Ribosomal_uL6_a/b-dom"/>
</dbReference>
<dbReference type="InterPro" id="IPR019906">
    <property type="entry name" value="Ribosomal_uL6_bac-type"/>
</dbReference>
<dbReference type="InterPro" id="IPR002358">
    <property type="entry name" value="Ribosomal_uL6_CS"/>
</dbReference>
<dbReference type="NCBIfam" id="TIGR03654">
    <property type="entry name" value="L6_bact"/>
    <property type="match status" value="1"/>
</dbReference>
<dbReference type="PANTHER" id="PTHR11655">
    <property type="entry name" value="60S/50S RIBOSOMAL PROTEIN L6/L9"/>
    <property type="match status" value="1"/>
</dbReference>
<dbReference type="PANTHER" id="PTHR11655:SF14">
    <property type="entry name" value="LARGE RIBOSOMAL SUBUNIT PROTEIN UL6M"/>
    <property type="match status" value="1"/>
</dbReference>
<dbReference type="Pfam" id="PF00347">
    <property type="entry name" value="Ribosomal_L6"/>
    <property type="match status" value="2"/>
</dbReference>
<dbReference type="PIRSF" id="PIRSF002162">
    <property type="entry name" value="Ribosomal_L6"/>
    <property type="match status" value="1"/>
</dbReference>
<dbReference type="PRINTS" id="PR00059">
    <property type="entry name" value="RIBOSOMALL6"/>
</dbReference>
<dbReference type="SUPFAM" id="SSF56053">
    <property type="entry name" value="Ribosomal protein L6"/>
    <property type="match status" value="2"/>
</dbReference>
<dbReference type="PROSITE" id="PS00525">
    <property type="entry name" value="RIBOSOMAL_L6_1"/>
    <property type="match status" value="1"/>
</dbReference>
<comment type="function">
    <text evidence="14">This protein binds directly to at least 2 domains of the 23S ribosomal RNA, thus is important in its secondary structure. It is located near the subunit interface in the base of the L7/L12 stalk, and near the tRNA binding site of the peptidyltransferase center.</text>
</comment>
<comment type="function">
    <text evidence="13">Gentamicin-resistant mutations in this protein affect translation fidelity.</text>
</comment>
<comment type="subunit">
    <text evidence="2 3 4 5 7 8 9 10 11 12">Part of the 50S ribosomal subunit (PubMed:10094780, PubMed:10756104, PubMed:12809609, PubMed:16272117, PubMed:25310980, PubMed:27906160, PubMed:27906161, PubMed:324885).</text>
</comment>
<comment type="mass spectrometry"/>
<comment type="similarity">
    <text evidence="1">Belongs to the universal ribosomal protein uL6 family.</text>
</comment>
<gene>
    <name evidence="1" type="primary">rplF</name>
    <name type="ordered locus">b3305</name>
    <name type="ordered locus">JW3267</name>
</gene>
<name>RL6_ECOLI</name>
<keyword id="KW-0002">3D-structure</keyword>
<keyword id="KW-0007">Acetylation</keyword>
<keyword id="KW-0046">Antibiotic resistance</keyword>
<keyword id="KW-0903">Direct protein sequencing</keyword>
<keyword id="KW-1185">Reference proteome</keyword>
<keyword id="KW-0687">Ribonucleoprotein</keyword>
<keyword id="KW-0689">Ribosomal protein</keyword>
<keyword id="KW-0694">RNA-binding</keyword>
<keyword id="KW-0699">rRNA-binding</keyword>
<accession>P0AG55</accession>
<accession>P02390</accession>
<accession>Q2M6X0</accession>
<organism>
    <name type="scientific">Escherichia coli (strain K12)</name>
    <dbReference type="NCBI Taxonomy" id="83333"/>
    <lineage>
        <taxon>Bacteria</taxon>
        <taxon>Pseudomonadati</taxon>
        <taxon>Pseudomonadota</taxon>
        <taxon>Gammaproteobacteria</taxon>
        <taxon>Enterobacterales</taxon>
        <taxon>Enterobacteriaceae</taxon>
        <taxon>Escherichia</taxon>
    </lineage>
</organism>
<evidence type="ECO:0000255" key="1">
    <source>
        <dbReference type="HAMAP-Rule" id="MF_01365"/>
    </source>
</evidence>
<evidence type="ECO:0000269" key="2">
    <source>
    </source>
</evidence>
<evidence type="ECO:0000269" key="3">
    <source>
    </source>
</evidence>
<evidence type="ECO:0000269" key="4">
    <source>
    </source>
</evidence>
<evidence type="ECO:0000269" key="5">
    <source>
    </source>
</evidence>
<evidence type="ECO:0000269" key="6">
    <source>
    </source>
</evidence>
<evidence type="ECO:0000269" key="7">
    <source>
    </source>
</evidence>
<evidence type="ECO:0000269" key="8">
    <source>
    </source>
</evidence>
<evidence type="ECO:0000269" key="9">
    <source>
    </source>
</evidence>
<evidence type="ECO:0000269" key="10">
    <source>
    </source>
</evidence>
<evidence type="ECO:0000269" key="11">
    <source>
    </source>
</evidence>
<evidence type="ECO:0000269" key="12">
    <source>
    </source>
</evidence>
<evidence type="ECO:0000269" key="13">
    <source>
    </source>
</evidence>
<evidence type="ECO:0000269" key="14">
    <source>
    </source>
</evidence>
<evidence type="ECO:0000269" key="15">
    <source>
    </source>
</evidence>
<evidence type="ECO:0000303" key="16">
    <source>
    </source>
</evidence>
<evidence type="ECO:0000305" key="17"/>
<evidence type="ECO:0007829" key="18">
    <source>
        <dbReference type="PDB" id="6I0Y"/>
    </source>
</evidence>
<evidence type="ECO:0007829" key="19">
    <source>
        <dbReference type="PDB" id="8ANA"/>
    </source>
</evidence>
<evidence type="ECO:0007829" key="20">
    <source>
        <dbReference type="PDB" id="8CGK"/>
    </source>
</evidence>
<evidence type="ECO:0007829" key="21">
    <source>
        <dbReference type="PDB" id="8CGV"/>
    </source>
</evidence>
<feature type="initiator methionine" description="Removed" evidence="12 15">
    <location>
        <position position="1"/>
    </location>
</feature>
<feature type="chain" id="PRO_0000131048" description="Large ribosomal subunit protein uL6">
    <location>
        <begin position="2"/>
        <end position="177"/>
    </location>
</feature>
<feature type="modified residue" description="N6-acetyllysine" evidence="1 6">
    <location>
        <position position="44"/>
    </location>
</feature>
<feature type="sequence variant" description="In gentamicin resistant strain: GS50-15." evidence="13">
    <original>RRPEPYKGKGVRYADEVVRTKEAKKK</original>
    <variation>AL</variation>
    <location>
        <begin position="152"/>
        <end position="177"/>
    </location>
</feature>
<feature type="sequence variant" description="In gentamicin resistant strain: GS20-8." evidence="13">
    <original>KGKGVRYADEVVRTKEAKKK</original>
    <variation>TL</variation>
    <location>
        <begin position="158"/>
        <end position="177"/>
    </location>
</feature>
<feature type="sequence conflict" description="In Ref. 2; CAA25720." evidence="17" ref="2">
    <original>G</original>
    <variation>D</variation>
    <location>
        <position position="82"/>
    </location>
</feature>
<feature type="sequence conflict" description="In Ref. 1; AA sequence." evidence="17" ref="1">
    <original>Q</original>
    <variation>E</variation>
    <location>
        <position position="88"/>
    </location>
</feature>
<feature type="helix" evidence="20">
    <location>
        <begin position="3"/>
        <end position="6"/>
    </location>
</feature>
<feature type="strand" evidence="20">
    <location>
        <begin position="16"/>
        <end position="20"/>
    </location>
</feature>
<feature type="strand" evidence="20">
    <location>
        <begin position="23"/>
        <end position="27"/>
    </location>
</feature>
<feature type="strand" evidence="18">
    <location>
        <begin position="29"/>
        <end position="31"/>
    </location>
</feature>
<feature type="strand" evidence="20">
    <location>
        <begin position="32"/>
        <end position="36"/>
    </location>
</feature>
<feature type="strand" evidence="21">
    <location>
        <begin position="41"/>
        <end position="44"/>
    </location>
</feature>
<feature type="turn" evidence="19">
    <location>
        <begin position="46"/>
        <end position="48"/>
    </location>
</feature>
<feature type="strand" evidence="21">
    <location>
        <begin position="50"/>
        <end position="54"/>
    </location>
</feature>
<feature type="helix" evidence="20">
    <location>
        <begin position="61"/>
        <end position="80"/>
    </location>
</feature>
<feature type="strand" evidence="20">
    <location>
        <begin position="83"/>
        <end position="91"/>
    </location>
</feature>
<feature type="strand" evidence="20">
    <location>
        <begin position="95"/>
        <end position="98"/>
    </location>
</feature>
<feature type="strand" evidence="20">
    <location>
        <begin position="100"/>
        <end position="108"/>
    </location>
</feature>
<feature type="strand" evidence="20">
    <location>
        <begin position="113"/>
        <end position="116"/>
    </location>
</feature>
<feature type="strand" evidence="20">
    <location>
        <begin position="122"/>
        <end position="124"/>
    </location>
</feature>
<feature type="strand" evidence="20">
    <location>
        <begin position="130"/>
        <end position="136"/>
    </location>
</feature>
<feature type="helix" evidence="20">
    <location>
        <begin position="138"/>
        <end position="151"/>
    </location>
</feature>
<feature type="turn" evidence="20">
    <location>
        <begin position="156"/>
        <end position="158"/>
    </location>
</feature>
<feature type="strand" evidence="20">
    <location>
        <begin position="161"/>
        <end position="166"/>
    </location>
</feature>
<reference key="1">
    <citation type="journal article" date="1977" name="Hoppe-Seyler's Z. Physiol. Chem.">
        <title>The primary structure of protein L6 from the aminoacyl-tRNA binding site of the Escherichia coli ribosome.</title>
        <authorList>
            <person name="Chen R."/>
            <person name="Arfsten U."/>
            <person name="Chen-Schmeisser U."/>
        </authorList>
    </citation>
    <scope>PRELIMINARY PROTEIN SEQUENCE OF 2-177</scope>
    <scope>SUBUNIT</scope>
    <source>
        <strain>K</strain>
    </source>
</reference>
<reference key="2">
    <citation type="journal article" date="1983" name="Nucleic Acids Res.">
        <title>The spc ribosomal protein operon of Escherichia coli: sequence and cotranscription of the ribosomal protein genes and a protein export gene.</title>
        <authorList>
            <person name="Cerretti D.P."/>
            <person name="Dean D."/>
            <person name="Davis G.R."/>
            <person name="Bedwell D.M."/>
            <person name="Nomura M."/>
        </authorList>
    </citation>
    <scope>NUCLEOTIDE SEQUENCE [GENOMIC DNA]</scope>
    <source>
        <strain>K12</strain>
    </source>
</reference>
<reference key="3">
    <citation type="journal article" date="1997" name="Science">
        <title>The complete genome sequence of Escherichia coli K-12.</title>
        <authorList>
            <person name="Blattner F.R."/>
            <person name="Plunkett G. III"/>
            <person name="Bloch C.A."/>
            <person name="Perna N.T."/>
            <person name="Burland V."/>
            <person name="Riley M."/>
            <person name="Collado-Vides J."/>
            <person name="Glasner J.D."/>
            <person name="Rode C.K."/>
            <person name="Mayhew G.F."/>
            <person name="Gregor J."/>
            <person name="Davis N.W."/>
            <person name="Kirkpatrick H.A."/>
            <person name="Goeden M.A."/>
            <person name="Rose D.J."/>
            <person name="Mau B."/>
            <person name="Shao Y."/>
        </authorList>
    </citation>
    <scope>NUCLEOTIDE SEQUENCE [LARGE SCALE GENOMIC DNA]</scope>
    <source>
        <strain>K12 / MG1655 / ATCC 47076</strain>
    </source>
</reference>
<reference key="4">
    <citation type="journal article" date="2006" name="Mol. Syst. Biol.">
        <title>Highly accurate genome sequences of Escherichia coli K-12 strains MG1655 and W3110.</title>
        <authorList>
            <person name="Hayashi K."/>
            <person name="Morooka N."/>
            <person name="Yamamoto Y."/>
            <person name="Fujita K."/>
            <person name="Isono K."/>
            <person name="Choi S."/>
            <person name="Ohtsubo E."/>
            <person name="Baba T."/>
            <person name="Wanner B.L."/>
            <person name="Mori H."/>
            <person name="Horiuchi T."/>
        </authorList>
    </citation>
    <scope>NUCLEOTIDE SEQUENCE [LARGE SCALE GENOMIC DNA]</scope>
    <source>
        <strain>K12 / W3110 / ATCC 27325 / DSM 5911</strain>
    </source>
</reference>
<reference key="5">
    <citation type="journal article" date="1997" name="Electrophoresis">
        <title>Comparing the predicted and observed properties of proteins encoded in the genome of Escherichia coli K-12.</title>
        <authorList>
            <person name="Link A.J."/>
            <person name="Robison K."/>
            <person name="Church G.M."/>
        </authorList>
    </citation>
    <scope>PROTEIN SEQUENCE OF 2-13</scope>
    <source>
        <strain>K12 / EMG2</strain>
    </source>
</reference>
<reference key="6">
    <citation type="journal article" date="1979" name="Biochemistry">
        <title>Alteration of ribosomal protein L6 in gentamicin-resistant strains of Escherichia coli. Effects on fidelity of protein synthesis.</title>
        <authorList>
            <person name="Kuehberger R."/>
            <person name="Piepersberg W."/>
            <person name="Petzet A."/>
            <person name="Buckel P."/>
            <person name="Boeck A."/>
        </authorList>
    </citation>
    <scope>ISOLATION</scope>
    <scope>CHARACTERIZATION OF VARIANTS GENTAMICIN-RESISTANT GE20-8; GS20-10 AND GS50-15</scope>
    <source>
        <strain>K12 / A19</strain>
    </source>
</reference>
<reference key="7">
    <citation type="journal article" date="1981" name="Nucleic Acids Res.">
        <title>The use of 2-iminothiolane as an RNA-protein cross-linking agent in Escherichia coli ribosomes, and the localisation on 23S RNA of sites cross-linked to proteins L4, L6, L21, L23, L27 and L29.</title>
        <authorList>
            <person name="Wower I."/>
            <person name="Wower J."/>
            <person name="Meinke M."/>
            <person name="Brimacombe R."/>
        </authorList>
    </citation>
    <scope>CROSS-LINKING TO 23S RRNA</scope>
    <source>
        <strain>MRE-600</strain>
    </source>
</reference>
<reference key="8">
    <citation type="journal article" date="1998" name="J. Mol. Biol.">
        <title>Ribosomal proteins S5 and L6: high-resolution crystal structures and roles in protein synthesis and antibiotic resistance.</title>
        <authorList>
            <person name="Davies C."/>
            <person name="Bussiere D.E."/>
            <person name="Golden B.L."/>
            <person name="Porter S.J."/>
            <person name="Ramakrishnan V."/>
            <person name="White S.W."/>
        </authorList>
    </citation>
    <scope>NUCLEOTIDE SEQUENCE [GENOMIC DNA] OF VARIANTS GENTAMICIN-RESISTANT</scope>
</reference>
<reference key="9">
    <citation type="journal article" date="1997" name="Electrophoresis">
        <title>Escherichia coli proteome analysis using the gene-protein database.</title>
        <authorList>
            <person name="VanBogelen R.A."/>
            <person name="Abshire K.Z."/>
            <person name="Moldover B."/>
            <person name="Olson E.R."/>
            <person name="Neidhardt F.C."/>
        </authorList>
    </citation>
    <scope>IDENTIFICATION BY 2D-GEL</scope>
</reference>
<reference key="10">
    <citation type="journal article" date="1999" name="Anal. Biochem.">
        <title>Observation of Escherichia coli ribosomal proteins and their posttranslational modifications by mass spectrometry.</title>
        <authorList>
            <person name="Arnold R.J."/>
            <person name="Reilly J.P."/>
        </authorList>
    </citation>
    <scope>MASS SPECTROMETRY</scope>
    <scope>SUBUNIT</scope>
    <source>
        <strain>K12 / ATCC 25404 / DSM 5698 / NCIMB 11290</strain>
    </source>
</reference>
<reference key="11">
    <citation type="journal article" date="2009" name="Mol. Cell. Proteomics">
        <title>Lysine acetylation is a highly abundant and evolutionarily conserved modification in Escherichia coli.</title>
        <authorList>
            <person name="Zhang J."/>
            <person name="Sprung R."/>
            <person name="Pei J."/>
            <person name="Tan X."/>
            <person name="Kim S."/>
            <person name="Zhu H."/>
            <person name="Liu C.F."/>
            <person name="Grishin N.V."/>
            <person name="Zhao Y."/>
        </authorList>
    </citation>
    <scope>ACETYLATION [LARGE SCALE ANALYSIS] AT LYS-44</scope>
    <scope>IDENTIFICATION BY MASS SPECTROMETRY</scope>
    <source>
        <strain>K12 / JW1106</strain>
        <strain>K12 / MG1655 / ATCC 47076</strain>
    </source>
</reference>
<reference key="12">
    <citation type="journal article" date="2014" name="Curr. Opin. Struct. Biol.">
        <title>A new system for naming ribosomal proteins.</title>
        <authorList>
            <person name="Ban N."/>
            <person name="Beckmann R."/>
            <person name="Cate J.H.D."/>
            <person name="Dinman J.D."/>
            <person name="Dragon F."/>
            <person name="Ellis S.R."/>
            <person name="Lafontaine D.L.J."/>
            <person name="Lindahl L."/>
            <person name="Liljas A."/>
            <person name="Lipton J.M."/>
            <person name="McAlear M.A."/>
            <person name="Moore P.B."/>
            <person name="Noller H.F."/>
            <person name="Ortega J."/>
            <person name="Panse V.G."/>
            <person name="Ramakrishnan V."/>
            <person name="Spahn C.M.T."/>
            <person name="Steitz T.A."/>
            <person name="Tchorzewski M."/>
            <person name="Tollervey D."/>
            <person name="Warren A.J."/>
            <person name="Williamson J.R."/>
            <person name="Wilson D."/>
            <person name="Yonath A."/>
            <person name="Yusupov M."/>
        </authorList>
    </citation>
    <scope>NOMENCLATURE</scope>
</reference>
<reference key="13">
    <citation type="journal article" date="2000" name="J. Mol. Biol.">
        <title>The 3D arrangement of the 23 S and 5 S rRNA in the Escherichia coli 50 S ribosomal subunit based on a cryo-electron microscopic reconstruction at 7.5 A resolution.</title>
        <authorList>
            <person name="Mueller F."/>
            <person name="Sommer I."/>
            <person name="Baranov P."/>
            <person name="Matadeen R."/>
            <person name="Stoldt M."/>
            <person name="Woehnert J."/>
            <person name="Goerlach M."/>
            <person name="van Heel M."/>
            <person name="Brimacombe R."/>
        </authorList>
    </citation>
    <scope>3D-STRUCTURE MODELING</scope>
    <scope>SUBUNIT</scope>
</reference>
<reference key="14">
    <citation type="journal article" date="2003" name="Cell">
        <title>Study of the structural dynamics of the E. coli 70S ribosome using real-space refinement.</title>
        <authorList>
            <person name="Gao H."/>
            <person name="Sengupta J."/>
            <person name="Valle M."/>
            <person name="Korostelev A."/>
            <person name="Eswar N."/>
            <person name="Stagg S.M."/>
            <person name="Van Roey P."/>
            <person name="Agrawal R.K."/>
            <person name="Harvey S.C."/>
            <person name="Sali A."/>
            <person name="Chapman M.S."/>
            <person name="Frank J."/>
        </authorList>
    </citation>
    <scope>STRUCTURE BY ELECTRON MICROSCOPY (11.50 ANGSTROMS)</scope>
    <scope>SUBUNIT</scope>
    <source>
        <strain>MRE-600</strain>
    </source>
</reference>
<reference key="15">
    <citation type="journal article" date="2005" name="Science">
        <title>Structures of the bacterial ribosome at 3.5 A resolution.</title>
        <authorList>
            <person name="Schuwirth B.S."/>
            <person name="Borovinskaya M.A."/>
            <person name="Hau C.W."/>
            <person name="Zhang W."/>
            <person name="Vila-Sanjurjo A."/>
            <person name="Holton J.M."/>
            <person name="Cate J.H.D."/>
        </authorList>
    </citation>
    <scope>X-RAY CRYSTALLOGRAPHY (3.46 ANGSTROMS) OF 2 DIFFERENT RIBOSOME STRUCTURES</scope>
    <scope>SUBUNIT</scope>
    <source>
        <strain>MRE-600</strain>
    </source>
</reference>
<reference key="16">
    <citation type="journal article" date="2014" name="Cell Rep.">
        <title>Molecular basis for the ribosome functioning as an L-tryptophan sensor.</title>
        <authorList>
            <person name="Bischoff L."/>
            <person name="Berninghausen O."/>
            <person name="Beckmann R."/>
        </authorList>
    </citation>
    <scope>STRUCTURE BY ELECTRON MICROSCOPY (3.80 ANGSTROMS) OF 2-177 IN TNAC-STALLED 50S RIBOSOMAL SUBUNIT</scope>
    <scope>SUBUNIT</scope>
    <source>
        <strain>K12 / A19 / KC6</strain>
    </source>
</reference>
<reference key="17">
    <citation type="journal article" date="2014" name="PLoS Biol.">
        <title>Structural and functional insights into the mode of action of a universally conserved Obg GTPase.</title>
        <authorList>
            <person name="Feng B."/>
            <person name="Mandava C.S."/>
            <person name="Guo Q."/>
            <person name="Wang J."/>
            <person name="Cao W."/>
            <person name="Li N."/>
            <person name="Zhang Y."/>
            <person name="Zhang Y."/>
            <person name="Wang Z."/>
            <person name="Wu J."/>
            <person name="Sanyal S."/>
            <person name="Lei J."/>
            <person name="Gao N."/>
        </authorList>
    </citation>
    <scope>STRUCTURE BY ELECTRON MICROSCOPY (5.5 ANGSTROMS) OF 2-177 OF 50S RIBOSOMAL SUBUNIT IN COMPLEX WITH OBGE AND GMP-PNP</scope>
    <scope>SUBUNIT</scope>
</reference>
<reference key="18">
    <citation type="journal article" date="2017" name="Nature">
        <title>Mechanistic insights into the alternative translation termination by ArfA and RF2.</title>
        <authorList>
            <person name="Ma C."/>
            <person name="Kurita D."/>
            <person name="Li N."/>
            <person name="Chen Y."/>
            <person name="Himeno H."/>
            <person name="Gao N."/>
        </authorList>
    </citation>
    <scope>STRUCTURE BY ELECTRON MICROSCOPY (3.0 ANGSTROMS) OF 70S RIBOSOME IN COMPLEX WITH ARFA AND RF2</scope>
    <scope>SUBUNIT</scope>
</reference>
<reference key="19">
    <citation type="journal article" date="2017" name="Nature">
        <title>Structural basis for ArfA-RF2-mediated translation termination on mRNAs lacking stop codons.</title>
        <authorList>
            <person name="Huter P."/>
            <person name="Mueller C."/>
            <person name="Beckert B."/>
            <person name="Arenz S."/>
            <person name="Berninghausen O."/>
            <person name="Beckmann R."/>
            <person name="Wilson D.N."/>
        </authorList>
    </citation>
    <scope>STRUCTURE BY ELECTRON MICROSCOPY (3.1 ANGSTROMS) OF 70S RIBOSOME IN COMPLEX WITH ARFA AND RF2</scope>
    <scope>SUBUNIT</scope>
</reference>
<reference key="20">
    <citation type="journal article" date="2016" name="Science">
        <title>Translational termination without a stop codon.</title>
        <authorList>
            <person name="James N.R."/>
            <person name="Brown A."/>
            <person name="Gordiyenko Y."/>
            <person name="Ramakrishnan V."/>
        </authorList>
    </citation>
    <scope>STRUCTURE BY ELECTRON MICROSCOPY (2.97 ANGSTROMS) OF 70S RIBOSOME IN COMPLEX WITH ARFA AND RF2</scope>
    <scope>SUBUNIT</scope>
</reference>
<reference key="21">
    <citation type="journal article" date="2017" name="Nature">
        <title>Structural basis of co-translational quality control by ArfA and RF2 bound to ribosome.</title>
        <authorList>
            <person name="Zeng F."/>
            <person name="Chen Y."/>
            <person name="Remis J."/>
            <person name="Shekhar M."/>
            <person name="Phillips J.C."/>
            <person name="Tajkhorshid E."/>
            <person name="Jin H."/>
        </authorList>
    </citation>
    <scope>STRUCTURE BY ELECTRON MICROSCOPY (3.52 ANGSTROMS) OF 70S RIBOSOME IN COMPLEX WITH ARFA AND RF2</scope>
    <scope>SUBUNIT</scope>
</reference>
<sequence>MSRVAKAPVVVPAGVDVKINGQVITIKGKNGELTRTLNDAVEVKHADNTLTFGPRDGYADGWAQAGTARALLNSMVIGVTEGFTKKLQLVGVGYRAAVKGNVINLSLGFSHPVDHQLPAGITAECPTQTEIVLKGADKQVIGQVAADLRAYRRPEPYKGKGVRYADEVVRTKEAKKK</sequence>
<proteinExistence type="evidence at protein level"/>